<gene>
    <name type="primary">BCL2L1</name>
    <name type="synonym">BCL2L</name>
    <name type="synonym">BCLX</name>
</gene>
<reference key="1">
    <citation type="journal article" date="1993" name="Cell">
        <title>bcl-x, a bcl-2-related gene that functions as a dominant regulator of apoptotic cell death.</title>
        <authorList>
            <person name="Boise L.H."/>
            <person name="Gonzalez-Garcia M."/>
            <person name="Postema C.E."/>
            <person name="Ding L."/>
            <person name="Lindsten T."/>
            <person name="Turka L.A."/>
            <person name="Mao X."/>
            <person name="Nunez G."/>
            <person name="Thompson C.B."/>
        </authorList>
    </citation>
    <scope>NUCLEOTIDE SEQUENCE [MRNA] (ISOFORMS BCL-X(L) AND BCL-X(S))</scope>
</reference>
<reference key="2">
    <citation type="journal article" date="1998" name="Biochem. Biophys. Res. Commun.">
        <title>Identification of a human cDNA encoding a novel Bcl-x isoform.</title>
        <authorList>
            <person name="Ban J."/>
            <person name="Eckhart L."/>
            <person name="Weninger W."/>
            <person name="Mildner M."/>
            <person name="Tschachler E."/>
        </authorList>
    </citation>
    <scope>NUCLEOTIDE SEQUENCE [MRNA] (ISOFORM BCL-X(BETA))</scope>
    <scope>INTERACTION WITH BAX</scope>
</reference>
<reference key="3">
    <citation type="submission" date="1996-10" db="EMBL/GenBank/DDBJ databases">
        <authorList>
            <person name="Inohara N."/>
            <person name="Ohta S."/>
        </authorList>
    </citation>
    <scope>NUCLEOTIDE SEQUENCE [GENOMIC DNA] (ISOFORM BCL-X(BETA))</scope>
</reference>
<reference key="4">
    <citation type="journal article" date="2007" name="BMC Genomics">
        <title>The full-ORF clone resource of the German cDNA consortium.</title>
        <authorList>
            <person name="Bechtel S."/>
            <person name="Rosenfelder H."/>
            <person name="Duda A."/>
            <person name="Schmidt C.P."/>
            <person name="Ernst U."/>
            <person name="Wellenreuther R."/>
            <person name="Mehrle A."/>
            <person name="Schuster C."/>
            <person name="Bahr A."/>
            <person name="Bloecker H."/>
            <person name="Heubner D."/>
            <person name="Hoerlein A."/>
            <person name="Michel G."/>
            <person name="Wedler H."/>
            <person name="Koehrer K."/>
            <person name="Ottenwaelder B."/>
            <person name="Poustka A."/>
            <person name="Wiemann S."/>
            <person name="Schupp I."/>
        </authorList>
    </citation>
    <scope>NUCLEOTIDE SEQUENCE [LARGE SCALE MRNA] (ISOFORM BCL-X(L))</scope>
    <source>
        <tissue>Colon carcinoma</tissue>
    </source>
</reference>
<reference key="5">
    <citation type="submission" date="2004-10" db="EMBL/GenBank/DDBJ databases">
        <title>Cloning of human full-length CDSs in BD Creator(TM) system donor vector.</title>
        <authorList>
            <person name="Kalnine N."/>
            <person name="Chen X."/>
            <person name="Rolfs A."/>
            <person name="Halleck A."/>
            <person name="Hines L."/>
            <person name="Eisenstein S."/>
            <person name="Koundinya M."/>
            <person name="Raphael J."/>
            <person name="Moreira D."/>
            <person name="Kelley T."/>
            <person name="LaBaer J."/>
            <person name="Lin Y."/>
            <person name="Phelan M."/>
            <person name="Farmer A."/>
        </authorList>
    </citation>
    <scope>NUCLEOTIDE SEQUENCE [LARGE SCALE MRNA] (ISOFORM BCL-X(L))</scope>
</reference>
<reference key="6">
    <citation type="journal article" date="2001" name="Nature">
        <title>The DNA sequence and comparative analysis of human chromosome 20.</title>
        <authorList>
            <person name="Deloukas P."/>
            <person name="Matthews L.H."/>
            <person name="Ashurst J.L."/>
            <person name="Burton J."/>
            <person name="Gilbert J.G.R."/>
            <person name="Jones M."/>
            <person name="Stavrides G."/>
            <person name="Almeida J.P."/>
            <person name="Babbage A.K."/>
            <person name="Bagguley C.L."/>
            <person name="Bailey J."/>
            <person name="Barlow K.F."/>
            <person name="Bates K.N."/>
            <person name="Beard L.M."/>
            <person name="Beare D.M."/>
            <person name="Beasley O.P."/>
            <person name="Bird C.P."/>
            <person name="Blakey S.E."/>
            <person name="Bridgeman A.M."/>
            <person name="Brown A.J."/>
            <person name="Buck D."/>
            <person name="Burrill W.D."/>
            <person name="Butler A.P."/>
            <person name="Carder C."/>
            <person name="Carter N.P."/>
            <person name="Chapman J.C."/>
            <person name="Clamp M."/>
            <person name="Clark G."/>
            <person name="Clark L.N."/>
            <person name="Clark S.Y."/>
            <person name="Clee C.M."/>
            <person name="Clegg S."/>
            <person name="Cobley V.E."/>
            <person name="Collier R.E."/>
            <person name="Connor R.E."/>
            <person name="Corby N.R."/>
            <person name="Coulson A."/>
            <person name="Coville G.J."/>
            <person name="Deadman R."/>
            <person name="Dhami P.D."/>
            <person name="Dunn M."/>
            <person name="Ellington A.G."/>
            <person name="Frankland J.A."/>
            <person name="Fraser A."/>
            <person name="French L."/>
            <person name="Garner P."/>
            <person name="Grafham D.V."/>
            <person name="Griffiths C."/>
            <person name="Griffiths M.N.D."/>
            <person name="Gwilliam R."/>
            <person name="Hall R.E."/>
            <person name="Hammond S."/>
            <person name="Harley J.L."/>
            <person name="Heath P.D."/>
            <person name="Ho S."/>
            <person name="Holden J.L."/>
            <person name="Howden P.J."/>
            <person name="Huckle E."/>
            <person name="Hunt A.R."/>
            <person name="Hunt S.E."/>
            <person name="Jekosch K."/>
            <person name="Johnson C.M."/>
            <person name="Johnson D."/>
            <person name="Kay M.P."/>
            <person name="Kimberley A.M."/>
            <person name="King A."/>
            <person name="Knights A."/>
            <person name="Laird G.K."/>
            <person name="Lawlor S."/>
            <person name="Lehvaeslaiho M.H."/>
            <person name="Leversha M.A."/>
            <person name="Lloyd C."/>
            <person name="Lloyd D.M."/>
            <person name="Lovell J.D."/>
            <person name="Marsh V.L."/>
            <person name="Martin S.L."/>
            <person name="McConnachie L.J."/>
            <person name="McLay K."/>
            <person name="McMurray A.A."/>
            <person name="Milne S.A."/>
            <person name="Mistry D."/>
            <person name="Moore M.J.F."/>
            <person name="Mullikin J.C."/>
            <person name="Nickerson T."/>
            <person name="Oliver K."/>
            <person name="Parker A."/>
            <person name="Patel R."/>
            <person name="Pearce T.A.V."/>
            <person name="Peck A.I."/>
            <person name="Phillimore B.J.C.T."/>
            <person name="Prathalingam S.R."/>
            <person name="Plumb R.W."/>
            <person name="Ramsay H."/>
            <person name="Rice C.M."/>
            <person name="Ross M.T."/>
            <person name="Scott C.E."/>
            <person name="Sehra H.K."/>
            <person name="Shownkeen R."/>
            <person name="Sims S."/>
            <person name="Skuce C.D."/>
            <person name="Smith M.L."/>
            <person name="Soderlund C."/>
            <person name="Steward C.A."/>
            <person name="Sulston J.E."/>
            <person name="Swann R.M."/>
            <person name="Sycamore N."/>
            <person name="Taylor R."/>
            <person name="Tee L."/>
            <person name="Thomas D.W."/>
            <person name="Thorpe A."/>
            <person name="Tracey A."/>
            <person name="Tromans A.C."/>
            <person name="Vaudin M."/>
            <person name="Wall M."/>
            <person name="Wallis J.M."/>
            <person name="Whitehead S.L."/>
            <person name="Whittaker P."/>
            <person name="Willey D.L."/>
            <person name="Williams L."/>
            <person name="Williams S.A."/>
            <person name="Wilming L."/>
            <person name="Wray P.W."/>
            <person name="Hubbard T."/>
            <person name="Durbin R.M."/>
            <person name="Bentley D.R."/>
            <person name="Beck S."/>
            <person name="Rogers J."/>
        </authorList>
    </citation>
    <scope>NUCLEOTIDE SEQUENCE [LARGE SCALE GENOMIC DNA]</scope>
</reference>
<reference key="7">
    <citation type="submission" date="2005-09" db="EMBL/GenBank/DDBJ databases">
        <authorList>
            <person name="Mural R.J."/>
            <person name="Istrail S."/>
            <person name="Sutton G.G."/>
            <person name="Florea L."/>
            <person name="Halpern A.L."/>
            <person name="Mobarry C.M."/>
            <person name="Lippert R."/>
            <person name="Walenz B."/>
            <person name="Shatkay H."/>
            <person name="Dew I."/>
            <person name="Miller J.R."/>
            <person name="Flanigan M.J."/>
            <person name="Edwards N.J."/>
            <person name="Bolanos R."/>
            <person name="Fasulo D."/>
            <person name="Halldorsson B.V."/>
            <person name="Hannenhalli S."/>
            <person name="Turner R."/>
            <person name="Yooseph S."/>
            <person name="Lu F."/>
            <person name="Nusskern D.R."/>
            <person name="Shue B.C."/>
            <person name="Zheng X.H."/>
            <person name="Zhong F."/>
            <person name="Delcher A.L."/>
            <person name="Huson D.H."/>
            <person name="Kravitz S.A."/>
            <person name="Mouchard L."/>
            <person name="Reinert K."/>
            <person name="Remington K.A."/>
            <person name="Clark A.G."/>
            <person name="Waterman M.S."/>
            <person name="Eichler E.E."/>
            <person name="Adams M.D."/>
            <person name="Hunkapiller M.W."/>
            <person name="Myers E.W."/>
            <person name="Venter J.C."/>
        </authorList>
    </citation>
    <scope>NUCLEOTIDE SEQUENCE [LARGE SCALE GENOMIC DNA]</scope>
</reference>
<reference key="8">
    <citation type="journal article" date="2004" name="Genome Res.">
        <title>The status, quality, and expansion of the NIH full-length cDNA project: the Mammalian Gene Collection (MGC).</title>
        <authorList>
            <consortium name="The MGC Project Team"/>
        </authorList>
    </citation>
    <scope>NUCLEOTIDE SEQUENCE [LARGE SCALE MRNA] (ISOFORM BCL-X(L))</scope>
    <source>
        <tissue>Lung</tissue>
    </source>
</reference>
<reference key="9">
    <citation type="journal article" date="1995" name="Proc. Natl. Acad. Sci. U.S.A.">
        <title>Multiple Bcl-2 family members demonstrate selective dimerizations with Bax.</title>
        <authorList>
            <person name="Sedlak T.W."/>
            <person name="Oltvai Z.N."/>
            <person name="Yang E."/>
            <person name="Wang K."/>
            <person name="Boise L.H."/>
            <person name="Thompson C.B."/>
            <person name="Korsmeyer S.J."/>
        </authorList>
    </citation>
    <scope>MUTAGENESIS OF GLY-138</scope>
    <scope>HETERODIMERIZATION</scope>
</reference>
<reference key="10">
    <citation type="journal article" date="1996" name="Nature">
        <title>Bax-independent inhibition of apoptosis by Bcl-XL.</title>
        <authorList>
            <person name="Cheng E.H.-Y."/>
            <person name="Levine B."/>
            <person name="Boise L.H."/>
            <person name="Thompson C.B."/>
            <person name="Hardwick J.M."/>
            <person name="Korsmeyer S.J."/>
        </authorList>
    </citation>
    <scope>MUTAGENESIS OF GLY-148; ASP-156; ASP-176 AND ASP-189</scope>
</reference>
<reference key="11">
    <citation type="journal article" date="1998" name="Proc. Natl. Acad. Sci. U.S.A.">
        <title>Modulation of cell death by Bcl-xL through caspase interaction.</title>
        <authorList>
            <person name="Clem R.J."/>
            <person name="Cheng E.H.-Y."/>
            <person name="Karp C.L."/>
            <person name="Kirsch D.G."/>
            <person name="Ueno K."/>
            <person name="Takahashi A."/>
            <person name="Kastan M.B."/>
            <person name="Griffin D.E."/>
            <person name="Earnshaw W.C."/>
            <person name="Veliuona M.A."/>
            <person name="Hardwick J.M."/>
        </authorList>
    </citation>
    <scope>CLEAVAGE BY CASPASES</scope>
    <scope>MUTAGENESIS OF ASP-61</scope>
</reference>
<reference key="12">
    <citation type="journal article" date="2000" name="Biochem. Biophys. Res. Commun.">
        <title>Characterization of Bax-sigma, a cell death-inducing isoform of Bax.</title>
        <authorList>
            <person name="Schmitt E."/>
            <person name="Paquet C."/>
            <person name="Beauchemin M."/>
            <person name="Dever-Bertrand J."/>
            <person name="Bertrand R."/>
        </authorList>
    </citation>
    <scope>INTERACTION WITH BAX</scope>
</reference>
<reference key="13">
    <citation type="journal article" date="2001" name="J. Immunol.">
        <title>The association of Aiolos transcription factor and Bcl-xL is involved in the control of apoptosis.</title>
        <authorList>
            <person name="Rebollo A."/>
            <person name="Ayllon V."/>
            <person name="Fleischer A."/>
            <person name="Martinez C.A."/>
            <person name="Zaballos A."/>
        </authorList>
    </citation>
    <scope>INTERACTION WITH IKZF3</scope>
</reference>
<reference key="14">
    <citation type="journal article" date="2001" name="Mol. Cell">
        <title>PUMA induces the rapid apoptosis of colorectal cancer cells.</title>
        <authorList>
            <person name="Yu J."/>
            <person name="Zhang L."/>
            <person name="Hwang P.M."/>
            <person name="Kinzler K.W."/>
            <person name="Vogelstein B."/>
        </authorList>
    </citation>
    <scope>INTERACTION WITH BCL2 AND BBC3</scope>
</reference>
<reference key="15">
    <citation type="journal article" date="2002" name="Proc. Natl. Acad. Sci. U.S.A.">
        <title>Siva-1 binds to and inhibits BCL-X(L)-mediated protection against UV radiation-induced apoptosis.</title>
        <authorList>
            <person name="Xue L."/>
            <person name="Chu F."/>
            <person name="Cheng Y."/>
            <person name="Sun X."/>
            <person name="Borthakur A."/>
            <person name="Ramarao M."/>
            <person name="Pandey P."/>
            <person name="Wu M."/>
            <person name="Schlossman S.F."/>
            <person name="Prasad K.V.S."/>
        </authorList>
    </citation>
    <scope>INTERACTION WITH SIVA1</scope>
</reference>
<reference key="16">
    <citation type="journal article" date="2006" name="J. Biol. Chem.">
        <title>PGAM5, a Bcl-XL-interacting protein, is a novel substrate for the redox-regulated Keap1-dependent ubiquitin ligase complex.</title>
        <authorList>
            <person name="Lo S.-C."/>
            <person name="Hannink M."/>
        </authorList>
    </citation>
    <scope>INTERACTION WITH PGAM5</scope>
</reference>
<reference key="17">
    <citation type="journal article" date="2006" name="PLoS Biol.">
        <title>IAN family critically regulates survival and development of T lymphocytes.</title>
        <authorList>
            <person name="Nitta T."/>
            <person name="Nasreen M."/>
            <person name="Seike T."/>
            <person name="Goji A."/>
            <person name="Ohigashi I."/>
            <person name="Miyazaki T."/>
            <person name="Ohta T."/>
            <person name="Kanno M."/>
            <person name="Takahama Y."/>
        </authorList>
    </citation>
    <scope>INTERACTION WITH GIMAP3 AND GIMAP5</scope>
</reference>
<reference key="18">
    <citation type="journal article" date="2007" name="Cell">
        <title>Bcl-2 and Bcl-XL regulate proinflammatory caspase-1 activation by interaction with NALP1.</title>
        <authorList>
            <person name="Bruey J.M."/>
            <person name="Bruey-Sedano N."/>
            <person name="Luciano F."/>
            <person name="Zhai D."/>
            <person name="Balpai R."/>
            <person name="Xu C."/>
            <person name="Kress C.L."/>
            <person name="Bailly-Maitre B."/>
            <person name="Li X."/>
            <person name="Osterman A."/>
            <person name="Matsuzawa S."/>
            <person name="Terskikh A.V."/>
            <person name="Faustin B."/>
            <person name="Reed J.C."/>
        </authorList>
    </citation>
    <scope>FUNCTION</scope>
    <scope>INTERACTION WITH NLRP1</scope>
</reference>
<reference key="19">
    <citation type="journal article" date="2010" name="Mol. Cell. Biol.">
        <title>Cyclin-dependent kinase 1-mediated Bcl-xL/Bcl-2 phosphorylation acts as a functional link coupling mitotic arrest and apoptosis.</title>
        <authorList>
            <person name="Terrano D.T."/>
            <person name="Upreti M."/>
            <person name="Chambers T.C."/>
        </authorList>
    </citation>
    <scope>FUNCTION IN APOPTOSIS</scope>
    <scope>PHOSPHORYLATION AT SER-62 BY CDK1</scope>
    <scope>SUBCELLULAR LOCATION</scope>
</reference>
<reference key="20">
    <citation type="journal article" date="2011" name="BMC Syst. Biol.">
        <title>Initial characterization of the human central proteome.</title>
        <authorList>
            <person name="Burkard T.R."/>
            <person name="Planyavsky M."/>
            <person name="Kaupe I."/>
            <person name="Breitwieser F.P."/>
            <person name="Buerckstuemmer T."/>
            <person name="Bennett K.L."/>
            <person name="Superti-Furga G."/>
            <person name="Colinge J."/>
        </authorList>
    </citation>
    <scope>IDENTIFICATION BY MASS SPECTROMETRY [LARGE SCALE ANALYSIS]</scope>
</reference>
<reference key="21">
    <citation type="journal article" date="2011" name="Cell. Signal.">
        <title>Bcl-xL phosphorylation at Ser49 by polo kinase 3 during cell cycle progression and checkpoints.</title>
        <authorList>
            <person name="Wang J."/>
            <person name="Beauchemin M."/>
            <person name="Bertrand R."/>
        </authorList>
    </citation>
    <scope>FUNCTION</scope>
    <scope>SUBCELLULAR LOCATION</scope>
    <scope>PHOSPHORYLATION AT SER-49</scope>
    <scope>MUTAGENESIS OF SER-49</scope>
</reference>
<reference key="22">
    <citation type="journal article" date="2012" name="Autophagy">
        <title>The anti-apoptotic Bcl-B protein inhibits BECN1-dependent autophagic cell death.</title>
        <authorList>
            <person name="Robert G."/>
            <person name="Gastaldi C."/>
            <person name="Puissant A."/>
            <person name="Hamouda A."/>
            <person name="Jacquel A."/>
            <person name="Dufies M."/>
            <person name="Belhacene N."/>
            <person name="Colosetti P."/>
            <person name="Reed J.C."/>
            <person name="Auberger P."/>
            <person name="Luciano F."/>
        </authorList>
    </citation>
    <scope>INTERACTION WITH BECN1</scope>
</reference>
<reference key="23">
    <citation type="journal article" date="2012" name="J. Cell. Physiol.">
        <title>Human nuclear clusterin mediates apoptosis by interacting with Bcl-XL through C-terminal coiled coil domain.</title>
        <authorList>
            <person name="Kim N."/>
            <person name="Yoo J.C."/>
            <person name="Han J.Y."/>
            <person name="Hwang E.M."/>
            <person name="Kim Y.S."/>
            <person name="Jeong E.Y."/>
            <person name="Sun C.H."/>
            <person name="Yi G.S."/>
            <person name="Roh G.S."/>
            <person name="Kim H.J."/>
            <person name="Kang S.S."/>
            <person name="Cho G.J."/>
            <person name="Park J.Y."/>
            <person name="Choi W.S."/>
        </authorList>
    </citation>
    <scope>INTERACTION WITH CLU</scope>
</reference>
<reference key="24">
    <citation type="journal article" date="2012" name="Protein Cell">
        <title>Human Bop is a novel BH3-only member of the Bcl-2 protein family.</title>
        <authorList>
            <person name="Zhang X."/>
            <person name="Weng C."/>
            <person name="Li Y."/>
            <person name="Wang X."/>
            <person name="Jiang C."/>
            <person name="Li X."/>
            <person name="Xu Y."/>
            <person name="Chen Q."/>
            <person name="Pan L."/>
            <person name="Tang H."/>
        </authorList>
    </citation>
    <scope>INTERACTION WITH RTL10</scope>
</reference>
<reference key="25">
    <citation type="journal article" date="2013" name="Nat. Cell Biol.">
        <title>A Bcl-xL-Drp1 complex regulates synaptic vesicle membrane dynamics during endocytosis.</title>
        <authorList>
            <person name="Li H."/>
            <person name="Alavian K.N."/>
            <person name="Lazrove E."/>
            <person name="Mehta N."/>
            <person name="Jones A."/>
            <person name="Zhang P."/>
            <person name="Licznerski P."/>
            <person name="Graham M."/>
            <person name="Uo T."/>
            <person name="Guo J."/>
            <person name="Rahner C."/>
            <person name="Duman R.S."/>
            <person name="Morrison R.S."/>
            <person name="Jonas E.A."/>
        </authorList>
    </citation>
    <scope>INTERACTION WITH DNM1L</scope>
    <scope>FUNCTION</scope>
    <scope>MUTAGENESIS OF 145-SER--GLY-147 AND 188-TRP--PHE-191</scope>
</reference>
<reference key="26">
    <citation type="journal article" date="2014" name="J. Biol. Chem.">
        <title>Plasminogen kringle 5 induces endothelial cell apoptosis by triggering a voltage-dependent anion channel 1 (VDAC1) positive feedback loop.</title>
        <authorList>
            <person name="Li L."/>
            <person name="Yao Y.C."/>
            <person name="Gu X.Q."/>
            <person name="Che D."/>
            <person name="Ma C.Q."/>
            <person name="Dai Z.Y."/>
            <person name="Li C."/>
            <person name="Zhou T."/>
            <person name="Cai W.B."/>
            <person name="Yang Z.H."/>
            <person name="Yang X."/>
            <person name="Gao G.Q."/>
        </authorList>
    </citation>
    <scope>INTERACTION WITH VDAC1</scope>
</reference>
<reference key="27">
    <citation type="journal article" date="2015" name="Proteomics">
        <title>N-terminome analysis of the human mitochondrial proteome.</title>
        <authorList>
            <person name="Vaca Jacome A.S."/>
            <person name="Rabilloud T."/>
            <person name="Schaeffer-Reiss C."/>
            <person name="Rompais M."/>
            <person name="Ayoub D."/>
            <person name="Lane L."/>
            <person name="Bairoch A."/>
            <person name="Van Dorsselaer A."/>
            <person name="Carapito C."/>
        </authorList>
    </citation>
    <scope>IDENTIFICATION BY MASS SPECTROMETRY [LARGE SCALE ANALYSIS]</scope>
</reference>
<reference key="28">
    <citation type="journal article" date="2016" name="EMBO Rep.">
        <title>The deubiquitinase Usp27x stabilizes the BH3-only protein Bim and enhances apoptosis.</title>
        <authorList>
            <person name="Weber A."/>
            <person name="Heinlein M."/>
            <person name="Dengjel J."/>
            <person name="Alber C."/>
            <person name="Singh P.K."/>
            <person name="Haecker G."/>
        </authorList>
    </citation>
    <scope>INTERACTION WITH BCL2L11</scope>
</reference>
<reference key="29">
    <citation type="journal article" date="2018" name="Proc. Natl. Acad. Sci. U.S.A.">
        <title>Transmembrane E3 ligase RNF183 mediates ER stress-induced apoptosis by degrading Bcl-xL.</title>
        <authorList>
            <person name="Wu Y."/>
            <person name="Li X."/>
            <person name="Jia J."/>
            <person name="Zhang Y."/>
            <person name="Li J."/>
            <person name="Zhu Z."/>
            <person name="Wang H."/>
            <person name="Tang J."/>
            <person name="Hu J."/>
        </authorList>
    </citation>
    <scope>UBIQUITINATION</scope>
    <scope>PROTEASOMAL DEGRADATION</scope>
    <scope>INTERACTION WITH RNF183</scope>
</reference>
<reference key="30">
    <citation type="journal article" date="1996" name="Nature">
        <title>X-ray and NMR structure of human Bcl-xL, an inhibitor of programmed cell death.</title>
        <authorList>
            <person name="Muchmore S.W."/>
            <person name="Sattler M."/>
            <person name="Liang H."/>
            <person name="Meadows R.P."/>
            <person name="Harlan J.E."/>
            <person name="Yoon H.S."/>
            <person name="Nettesheim D."/>
            <person name="Chang B.S."/>
            <person name="Thompson C.B."/>
            <person name="Wong S.L."/>
            <person name="Ng S.L."/>
            <person name="Fesik S.W."/>
        </authorList>
    </citation>
    <scope>X-RAY CRYSTALLOGRAPHY (2.2 ANGSTROMS)</scope>
    <scope>STRUCTURE BY NMR OF 1-209</scope>
</reference>
<reference key="31">
    <citation type="journal article" date="1997" name="Science">
        <title>Structure of Bcl-xL-Bak peptide complex: recognition between regulators of apoptosis.</title>
        <authorList>
            <person name="Sattler M."/>
            <person name="Liang H."/>
            <person name="Nettesheim D."/>
            <person name="Meadows R.P."/>
            <person name="Harlan J.E."/>
            <person name="Eberstadt M."/>
            <person name="Yoon H.S."/>
            <person name="Shuker S.B."/>
            <person name="Chang B.S."/>
            <person name="Minn A.J."/>
            <person name="Thompson C.B."/>
            <person name="Fesik S.W."/>
        </authorList>
    </citation>
    <scope>STRUCTURE BY NMR OF 1-209</scope>
</reference>
<reference key="32">
    <citation type="journal article" date="2000" name="Protein Sci.">
        <title>Rationale for Bcl-xL/Bad peptide complex formation from structure, mutagenesis, and biophysical studies.</title>
        <authorList>
            <person name="Petros A.M."/>
            <person name="Nettesheim D.G."/>
            <person name="Wang Y."/>
            <person name="Olejniczak E.T."/>
            <person name="Meadows R.P."/>
            <person name="Mack J."/>
            <person name="Swift K."/>
            <person name="Matayoshi E.D."/>
            <person name="Zhang H."/>
            <person name="Thompson C.B."/>
            <person name="Fesik S.W."/>
        </authorList>
    </citation>
    <scope>STRUCTURE BY NMR OF 1-209 IN COMPLEX WITH BAD</scope>
</reference>
<reference key="33">
    <citation type="journal article" date="2004" name="J. Biol. Chem.">
        <title>Bcl-XL mutations suppress cellular sensitivity to antimycin A.</title>
        <authorList>
            <person name="Manion M.K."/>
            <person name="O'Neill J.W."/>
            <person name="Giedt C.D."/>
            <person name="Kim K.M."/>
            <person name="Zhang K.Y.Z."/>
            <person name="Hockenbery D.M."/>
        </authorList>
    </citation>
    <scope>X-RAY CRYSTALLOGRAPHY (1.95 ANGSTROMS) OF 1-211</scope>
</reference>
<reference key="34">
    <citation type="journal article" date="2005" name="Nature">
        <title>An inhibitor of Bcl-2 family proteins induces regression of solid tumours.</title>
        <authorList>
            <person name="Oltersdorf T."/>
            <person name="Elmore S.W."/>
            <person name="Shoemaker A.R."/>
            <person name="Armstrong R.C."/>
            <person name="Augeri D.J."/>
            <person name="Belli B.A."/>
            <person name="Bruncko M."/>
            <person name="Deckwerth T.L."/>
            <person name="Dinges J."/>
            <person name="Hajduk P.J."/>
            <person name="Joseph M.K."/>
            <person name="Kitada S."/>
            <person name="Korsmeyer S.J."/>
            <person name="Kunzer A.R."/>
            <person name="Letai A."/>
            <person name="Li C."/>
            <person name="Mitten M.J."/>
            <person name="Nettesheim D.G."/>
            <person name="Ng S.-C."/>
            <person name="Nimmer P.M."/>
            <person name="O'Connor J.M."/>
            <person name="Oleksijew A."/>
            <person name="Petros A.M."/>
            <person name="Reed J.C."/>
            <person name="Shen W."/>
            <person name="Tahir S.K."/>
            <person name="Thompson C.B."/>
            <person name="Tomaselli K.J."/>
            <person name="Wang B."/>
            <person name="Wendt M.D."/>
            <person name="Zhang H."/>
            <person name="Fesik S.W."/>
            <person name="Rosenberg S.H."/>
        </authorList>
    </citation>
    <scope>STRUCTURE BY NMR OF 1-209</scope>
</reference>
<reference key="35">
    <citation type="journal article" date="2006" name="J. Mol. Biol.">
        <title>BCL-XL dimerization by three-dimensional domain swapping.</title>
        <authorList>
            <person name="O'Neill J.W."/>
            <person name="Manion M.K."/>
            <person name="Maguire B."/>
            <person name="Hockenbery D.M."/>
        </authorList>
    </citation>
    <scope>X-RAY CRYSTALLOGRAPHY (3.45 ANGSTROMS) OF 1-211</scope>
    <scope>HOMODIMERIZATION</scope>
</reference>
<reference key="36">
    <citation type="journal article" date="2007" name="J. Biol. Chem.">
        <title>Crystal structure of the Bcl-XL-Beclin 1 peptide complex: Beclin 1 is a novel BH3-only protein.</title>
        <authorList>
            <person name="Oberstein A."/>
            <person name="Jeffrey P.D."/>
            <person name="Shi Y."/>
        </authorList>
    </citation>
    <scope>X-RAY CRYSTALLOGRAPHY (2.5 ANGSTROMS) OF 83-209 IN COMPLEX WITH BECN1</scope>
</reference>
<reference key="37">
    <citation type="journal article" date="2007" name="J. Med. Chem.">
        <title>Studies leading to potent, dual inhibitors of Bcl-2 and Bcl-xL.</title>
        <authorList>
            <person name="Bruncko M."/>
            <person name="Oost T.K."/>
            <person name="Belli B.A."/>
            <person name="Ding H."/>
            <person name="Joseph M.K."/>
            <person name="Kunzer A."/>
            <person name="Martineau D."/>
            <person name="McClellan W.J."/>
            <person name="Mitten M."/>
            <person name="Ng S.-C."/>
            <person name="Nimmer P.M."/>
            <person name="Oltersdorf T."/>
            <person name="Park C.-M."/>
            <person name="Petros A.M."/>
            <person name="Shoemaker A.R."/>
            <person name="Song X."/>
            <person name="Wang X."/>
            <person name="Wendt M.D."/>
            <person name="Zhang H."/>
            <person name="Fesik S.W."/>
            <person name="Rosenberg S.H."/>
            <person name="Elmore S.W."/>
        </authorList>
    </citation>
    <scope>STRUCTURE BY NMR OF 1-209</scope>
</reference>
<reference key="38">
    <citation type="journal article" date="2011" name="Biochem. J.">
        <title>Structural changes in the BH3 domain of SOUL protein upon interaction with the anti-apoptotic protein Bcl-xL.</title>
        <authorList>
            <person name="Ambrosi E."/>
            <person name="Capaldi S."/>
            <person name="Bovi M."/>
            <person name="Saccomani G."/>
            <person name="Perduca M."/>
            <person name="Monaco H.L."/>
        </authorList>
    </citation>
    <scope>X-RAY CRYSTALLOGRAPHY (1.95 ANGSTROMS) OF 1-209 IN COMPLEX WITH HEBP2</scope>
    <scope>INTERACTION WITH HEBP2</scope>
</reference>
<reference key="39">
    <citation type="journal article" date="2013" name="Nat. Chem. Biol.">
        <title>PUMA binding induces partial unfolding within BCL-xL to disrupt p53 binding and promote apoptosis.</title>
        <authorList>
            <person name="Follis A.V."/>
            <person name="Chipuk J.E."/>
            <person name="Fisher J.C."/>
            <person name="Yun M.K."/>
            <person name="Grace C.R."/>
            <person name="Nourse A."/>
            <person name="Baran K."/>
            <person name="Ou L."/>
            <person name="Min L."/>
            <person name="White S.W."/>
            <person name="Green D.R."/>
            <person name="Kriwacki R.W."/>
        </authorList>
    </citation>
    <scope>X-RAY CRYSTALLOGRAPHY (2.9 ANGSTROMS) OF 1-209 IN COMPLEX WITH BBC3</scope>
    <scope>STRUCTURE BY NMR OF 1-209 IN COMPLEX WITH BBC3</scope>
    <scope>INTERACTION WITH BBC3 AND TP53</scope>
</reference>
<accession>Q07817</accession>
<accession>E1P5L6</accession>
<accession>Q5CZ89</accession>
<accession>Q5TE65</accession>
<accession>Q92976</accession>
<proteinExistence type="evidence at protein level"/>
<organism>
    <name type="scientific">Homo sapiens</name>
    <name type="common">Human</name>
    <dbReference type="NCBI Taxonomy" id="9606"/>
    <lineage>
        <taxon>Eukaryota</taxon>
        <taxon>Metazoa</taxon>
        <taxon>Chordata</taxon>
        <taxon>Craniata</taxon>
        <taxon>Vertebrata</taxon>
        <taxon>Euteleostomi</taxon>
        <taxon>Mammalia</taxon>
        <taxon>Eutheria</taxon>
        <taxon>Euarchontoglires</taxon>
        <taxon>Primates</taxon>
        <taxon>Haplorrhini</taxon>
        <taxon>Catarrhini</taxon>
        <taxon>Hominidae</taxon>
        <taxon>Homo</taxon>
    </lineage>
</organism>
<sequence length="233" mass="26049">MSQSNRELVVDFLSYKLSQKGYSWSQFSDVEENRTEAPEGTESEMETPSAINGNPSWHLADSPAVNGATGHSSSLDAREVIPMAAVKQALREAGDEFELRYRRAFSDLTSQLHITPGTAYQSFEQVVNELFRDGVNWGRIVAFFSFGGALCVESVDKEMQVLVSRIAAWMATYLNDHLEPWIQENGGWDTFVELYGNNAAAESRKGQERFNRWFLTGMTVAGVVLLGSLFSRK</sequence>
<protein>
    <recommendedName>
        <fullName>Bcl-2-like protein 1</fullName>
        <shortName>Bcl2-L-1</shortName>
    </recommendedName>
    <alternativeName>
        <fullName>Apoptosis regulator Bcl-X</fullName>
    </alternativeName>
</protein>
<comment type="function">
    <text>Potent inhibitor of cell death. Inhibits activation of caspases. Appears to regulate cell death by blocking the voltage-dependent anion channel (VDAC) by binding to it and preventing the release of the caspase activator, CYC1, from the mitochondrial membrane. Also acts as a regulator of G2 checkpoint and progression to cytokinesis during mitosis.</text>
</comment>
<comment type="function">
    <text evidence="14">Isoform Bcl-X(L) also regulates presynaptic plasticity, including neurotransmitter release and recovery, number of axonal mitochondria as well as size and number of synaptic vesicle clusters. During synaptic stimulation, increases ATP availability from mitochondria through regulation of mitochondrial membrane ATP synthase F(1)F(0) activity and regulates endocytic vesicle retrieval in hippocampal neurons through association with DMN1L and stimulation of its GTPase activity in synaptic vesicles. May attenuate inflammation impairing NLRP1-inflammasome activation, hence CASP1 activation and IL1B release (PubMed:17418785).</text>
</comment>
<comment type="function">
    <text>Isoform Bcl-X(S) promotes apoptosis.</text>
</comment>
<comment type="subunit">
    <text evidence="2 3 6 7 8 11 12 16 17 21 23 24 25 29">Homodimer. Interacts with BCL2L11 (By similarity). Interacts with BAD. Interacts with PGAM5. Interacts with HEBP2. Interacts with p53/TP53 and BBC3; interaction with BBC3 disrupts the interaction with p53/TP53. Interacts with ATP5F1A and ATP5F1B; the interactions mediate the association of isoform Bcl-X(L) with the mitochondrial membrane ATP synthase F(1)F(0) ATP synthase. Interacts with VDAC1 (PubMed:25296756). Interacts with BCL2L11 (via BH3) (PubMed:27013495). Interacts with RNF183 (PubMed:29507230). Interacts with GIMAP3/IAN4 and GIMAP5/IAN5 (PubMed:16509771). Interacts with GIMAP5 and HSPA8/HSC70; the interaction between HSPA8 and BCL2L1 is impaired in the absence of GIMAP5 (By similarity). Interacts with isoform 4 of CLU; this interaction releases and activates BAX and promotes cell death (PubMed:21567405).</text>
</comment>
<comment type="subunit">
    <molecule>Isoform Bcl-X(L)</molecule>
    <text evidence="9 10 13 14 19 20 22 26">Forms heterodimers with BAX, BAK or BCL2; heterodimerization with BAX does not seem to be required for anti-apoptotic activity (PubMed:7644501). Interacts with isoform 1 of SIVA1; the interaction inhibits the anti-apoptotic activity (PubMed:12011449). Interacts with IKZF3 (PubMed:11714801). Interacts with RTL10/BOP (PubMed:23055042). Interacts with DNM1L and CLTA; DNM1L and BCL2L1 isoform BCL-X(L) may form a complex in synaptic vesicles that also contains clathrin and MFF (PubMed:23792689). Interacts (via the loop between motifs BH4 and BH3) with NLRP1 (via LRR repeats), but not with NLRP2, NLRP3, NLRP4, PYCARD, nor MEFV (PubMed:17418785). Interacts with BECN1 (PubMed:17337444, PubMed:22498477).</text>
</comment>
<comment type="interaction">
    <interactant intactId="EBI-78035">
        <id>Q07817</id>
    </interactant>
    <interactant intactId="EBI-700771">
        <id>Q92934</id>
        <label>BAD</label>
    </interactant>
    <organismsDiffer>false</organismsDiffer>
    <experiments>47</experiments>
</comment>
<comment type="interaction">
    <interactant intactId="EBI-78035">
        <id>Q07817</id>
    </interactant>
    <interactant intactId="EBI-519866">
        <id>Q16611</id>
        <label>BAK1</label>
    </interactant>
    <organismsDiffer>false</organismsDiffer>
    <experiments>38</experiments>
</comment>
<comment type="interaction">
    <interactant intactId="EBI-78035">
        <id>Q07817</id>
    </interactant>
    <interactant intactId="EBI-78035">
        <id>Q07817</id>
        <label>BCL2L1</label>
    </interactant>
    <organismsDiffer>false</organismsDiffer>
    <experiments>2</experiments>
</comment>
<comment type="interaction">
    <interactant intactId="EBI-78035">
        <id>Q07817</id>
    </interactant>
    <interactant intactId="EBI-526406">
        <id>O43521</id>
        <label>BCL2L11</label>
    </interactant>
    <organismsDiffer>false</organismsDiffer>
    <experiments>11</experiments>
</comment>
<comment type="interaction">
    <interactant intactId="EBI-78035">
        <id>Q07817</id>
    </interactant>
    <interactant intactId="EBI-949378">
        <id>Q14457</id>
        <label>BECN1</label>
    </interactant>
    <organismsDiffer>false</organismsDiffer>
    <experiments>2</experiments>
</comment>
<comment type="interaction">
    <interactant intactId="EBI-78035">
        <id>Q07817</id>
    </interactant>
    <interactant intactId="EBI-519672">
        <id>P55957</id>
        <label>BID</label>
    </interactant>
    <organismsDiffer>false</organismsDiffer>
    <experiments>3</experiments>
</comment>
<comment type="interaction">
    <interactant intactId="EBI-78035">
        <id>Q07817</id>
    </interactant>
    <interactant intactId="EBI-700794">
        <id>Q13323</id>
        <label>BIK</label>
    </interactant>
    <organismsDiffer>false</organismsDiffer>
    <experiments>12</experiments>
</comment>
<comment type="interaction">
    <interactant intactId="EBI-78035">
        <id>Q07817</id>
    </interactant>
    <interactant intactId="EBI-3919268">
        <id>Q96LC9</id>
        <label>BMF</label>
    </interactant>
    <organismsDiffer>false</organismsDiffer>
    <experiments>12</experiments>
</comment>
<comment type="interaction">
    <interactant intactId="EBI-78035">
        <id>Q07817</id>
    </interactant>
    <interactant intactId="EBI-12806802">
        <id>P0C671</id>
        <label>BNIP5</label>
    </interactant>
    <organismsDiffer>false</organismsDiffer>
    <experiments>3</experiments>
</comment>
<comment type="interaction">
    <interactant intactId="EBI-78035">
        <id>Q07817</id>
    </interactant>
    <interactant intactId="EBI-13381098">
        <id>Q8IYJ2-2</id>
        <label>C10orf67</label>
    </interactant>
    <organismsDiffer>false</organismsDiffer>
    <experiments>3</experiments>
</comment>
<comment type="interaction">
    <interactant intactId="EBI-78035">
        <id>Q07817</id>
    </interactant>
    <interactant intactId="EBI-18535450">
        <id>Q9GZR5</id>
        <label>ELOVL4</label>
    </interactant>
    <organismsDiffer>false</organismsDiffer>
    <experiments>3</experiments>
</comment>
<comment type="interaction">
    <interactant intactId="EBI-78035">
        <id>Q07817</id>
    </interactant>
    <interactant intactId="EBI-781551">
        <id>Q9Y282</id>
        <label>ERGIC3</label>
    </interactant>
    <organismsDiffer>false</organismsDiffer>
    <experiments>3</experiments>
</comment>
<comment type="interaction">
    <interactant intactId="EBI-78035">
        <id>Q07817</id>
    </interactant>
    <interactant intactId="EBI-3939849">
        <id>P27469</id>
        <label>G0S2</label>
    </interactant>
    <organismsDiffer>false</organismsDiffer>
    <experiments>3</experiments>
</comment>
<comment type="interaction">
    <interactant intactId="EBI-78035">
        <id>Q07817</id>
    </interactant>
    <interactant intactId="EBI-17844792">
        <id>P22749</id>
        <label>GNLY</label>
    </interactant>
    <organismsDiffer>false</organismsDiffer>
    <experiments>3</experiments>
</comment>
<comment type="interaction">
    <interactant intactId="EBI-78035">
        <id>Q07817</id>
    </interactant>
    <interactant intactId="EBI-712073">
        <id>Q8NBJ4</id>
        <label>GOLM1</label>
    </interactant>
    <organismsDiffer>false</organismsDiffer>
    <experiments>3</experiments>
</comment>
<comment type="interaction">
    <interactant intactId="EBI-78035">
        <id>Q07817</id>
    </interactant>
    <interactant intactId="EBI-3917143">
        <id>Q5T7V8</id>
        <label>GORAB</label>
    </interactant>
    <organismsDiffer>false</organismsDiffer>
    <experiments>3</experiments>
</comment>
<comment type="interaction">
    <interactant intactId="EBI-78035">
        <id>Q07817</id>
    </interactant>
    <interactant intactId="EBI-3923617">
        <id>Q9H2K0</id>
        <label>MTIF3</label>
    </interactant>
    <organismsDiffer>false</organismsDiffer>
    <experiments>3</experiments>
</comment>
<comment type="interaction">
    <interactant intactId="EBI-78035">
        <id>Q07817</id>
    </interactant>
    <interactant intactId="EBI-1220518">
        <id>Q9C000</id>
        <label>NLRP1</label>
    </interactant>
    <organismsDiffer>false</organismsDiffer>
    <experiments>9</experiments>
</comment>
<comment type="interaction">
    <interactant intactId="EBI-78035">
        <id>Q07817</id>
    </interactant>
    <interactant intactId="EBI-7545592">
        <id>Q9H6H4</id>
        <label>REEP4</label>
    </interactant>
    <organismsDiffer>false</organismsDiffer>
    <experiments>3</experiments>
</comment>
<comment type="interaction">
    <interactant intactId="EBI-78035">
        <id>Q07817</id>
    </interactant>
    <interactant intactId="EBI-17589229">
        <id>Q6NTF9-3</id>
        <label>RHBDD2</label>
    </interactant>
    <organismsDiffer>false</organismsDiffer>
    <experiments>3</experiments>
</comment>
<comment type="interaction">
    <interactant intactId="EBI-78035">
        <id>Q07817</id>
    </interactant>
    <interactant intactId="EBI-12375429">
        <id>Q7Z5B4-5</id>
        <label>RIC3</label>
    </interactant>
    <organismsDiffer>false</organismsDiffer>
    <experiments>3</experiments>
</comment>
<comment type="interaction">
    <interactant intactId="EBI-78035">
        <id>Q07817</id>
    </interactant>
    <interactant intactId="EBI-2340927">
        <id>P78317</id>
        <label>RNF4</label>
    </interactant>
    <organismsDiffer>false</organismsDiffer>
    <experiments>3</experiments>
</comment>
<comment type="interaction">
    <interactant intactId="EBI-78035">
        <id>Q07817</id>
    </interactant>
    <interactant intactId="EBI-520756">
        <id>O15304</id>
        <label>SIVA1</label>
    </interactant>
    <organismsDiffer>false</organismsDiffer>
    <experiments>2</experiments>
</comment>
<comment type="interaction">
    <interactant intactId="EBI-78035">
        <id>Q07817</id>
    </interactant>
    <interactant intactId="EBI-985879">
        <id>P37840</id>
        <label>SNCA</label>
    </interactant>
    <organismsDiffer>false</organismsDiffer>
    <experiments>3</experiments>
</comment>
<comment type="interaction">
    <interactant intactId="EBI-78035">
        <id>Q07817</id>
    </interactant>
    <interactant intactId="EBI-1386527">
        <id>Q9H2V7</id>
        <label>SPNS1</label>
    </interactant>
    <organismsDiffer>false</organismsDiffer>
    <experiments>3</experiments>
</comment>
<comment type="interaction">
    <interactant intactId="EBI-78035">
        <id>Q07817</id>
    </interactant>
    <interactant intactId="EBI-12366453">
        <id>P56557</id>
        <label>TMEM50B</label>
    </interactant>
    <organismsDiffer>false</organismsDiffer>
    <experiments>3</experiments>
</comment>
<comment type="interaction">
    <interactant intactId="EBI-78035">
        <id>Q07817</id>
    </interactant>
    <interactant intactId="EBI-10180829">
        <id>Q7KZS0</id>
        <label>UBE2I</label>
    </interactant>
    <organismsDiffer>false</organismsDiffer>
    <experiments>3</experiments>
</comment>
<comment type="interaction">
    <interactant intactId="EBI-287195">
        <id>Q07817-1</id>
    </interactant>
    <interactant intactId="EBI-700771">
        <id>Q92934</id>
        <label>BAD</label>
    </interactant>
    <organismsDiffer>false</organismsDiffer>
    <experiments>6</experiments>
</comment>
<comment type="interaction">
    <interactant intactId="EBI-287195">
        <id>Q07817-1</id>
    </interactant>
    <interactant intactId="EBI-519866">
        <id>Q16611</id>
        <label>BAK1</label>
    </interactant>
    <organismsDiffer>false</organismsDiffer>
    <experiments>13</experiments>
</comment>
<comment type="interaction">
    <interactant intactId="EBI-287195">
        <id>Q07817-1</id>
    </interactant>
    <interactant intactId="EBI-516580">
        <id>Q07812</id>
        <label>BAX</label>
    </interactant>
    <organismsDiffer>false</organismsDiffer>
    <experiments>21</experiments>
</comment>
<comment type="interaction">
    <interactant intactId="EBI-287195">
        <id>Q07817-1</id>
    </interactant>
    <interactant intactId="EBI-519884">
        <id>Q9BXH1</id>
        <label>BBC3</label>
    </interactant>
    <organismsDiffer>false</organismsDiffer>
    <experiments>9</experiments>
</comment>
<comment type="interaction">
    <interactant intactId="EBI-287195">
        <id>Q07817-1</id>
    </interactant>
    <interactant intactId="EBI-287195">
        <id>Q07817-1</id>
        <label>BCL2L1</label>
    </interactant>
    <organismsDiffer>false</organismsDiffer>
    <experiments>6</experiments>
</comment>
<comment type="interaction">
    <interactant intactId="EBI-287195">
        <id>Q07817-1</id>
    </interactant>
    <interactant intactId="EBI-526406">
        <id>O43521</id>
        <label>BCL2L11</label>
    </interactant>
    <organismsDiffer>false</organismsDiffer>
    <experiments>10</experiments>
</comment>
<comment type="interaction">
    <interactant intactId="EBI-287195">
        <id>Q07817-1</id>
    </interactant>
    <interactant intactId="EBI-526416">
        <id>O43521-1</id>
        <label>BCL2L11</label>
    </interactant>
    <organismsDiffer>false</organismsDiffer>
    <experiments>2</experiments>
</comment>
<comment type="interaction">
    <interactant intactId="EBI-287195">
        <id>Q07817-1</id>
    </interactant>
    <interactant intactId="EBI-949378">
        <id>Q14457</id>
        <label>BECN1</label>
    </interactant>
    <organismsDiffer>false</organismsDiffer>
    <experiments>5</experiments>
</comment>
<comment type="interaction">
    <interactant intactId="EBI-287195">
        <id>Q07817-1</id>
    </interactant>
    <interactant intactId="EBI-519672">
        <id>P55957</id>
        <label>BID</label>
    </interactant>
    <organismsDiffer>false</organismsDiffer>
    <experiments>7</experiments>
</comment>
<comment type="interaction">
    <interactant intactId="EBI-287195">
        <id>Q07817-1</id>
    </interactant>
    <interactant intactId="EBI-700794">
        <id>Q13323</id>
        <label>BIK</label>
    </interactant>
    <organismsDiffer>false</organismsDiffer>
    <experiments>4</experiments>
</comment>
<comment type="interaction">
    <interactant intactId="EBI-287195">
        <id>Q07817-1</id>
    </interactant>
    <interactant intactId="EBI-4322678">
        <id>P10909-4</id>
        <label>CLU</label>
    </interactant>
    <organismsDiffer>false</organismsDiffer>
    <experiments>6</experiments>
</comment>
<comment type="interaction">
    <interactant intactId="EBI-287195">
        <id>Q07817-1</id>
    </interactant>
    <interactant intactId="EBI-701322">
        <id>O00198</id>
        <label>HRK</label>
    </interactant>
    <organismsDiffer>false</organismsDiffer>
    <experiments>3</experiments>
</comment>
<comment type="interaction">
    <interactant intactId="EBI-287195">
        <id>Q07817-1</id>
    </interactant>
    <interactant intactId="EBI-359260">
        <id>P42345</id>
        <label>MTOR</label>
    </interactant>
    <organismsDiffer>false</organismsDiffer>
    <experiments>4</experiments>
</comment>
<comment type="interaction">
    <interactant intactId="EBI-287195">
        <id>Q07817-1</id>
    </interactant>
    <interactant intactId="EBI-1220518">
        <id>Q9C000</id>
        <label>NLRP1</label>
    </interactant>
    <organismsDiffer>false</organismsDiffer>
    <experiments>2</experiments>
</comment>
<comment type="interaction">
    <interactant intactId="EBI-287195">
        <id>Q07817-1</id>
    </interactant>
    <interactant intactId="EBI-10697720">
        <id>Q7L3V2</id>
        <label>RTL10</label>
    </interactant>
    <organismsDiffer>false</organismsDiffer>
    <experiments>3</experiments>
</comment>
<comment type="interaction">
    <interactant intactId="EBI-287195">
        <id>Q07817-1</id>
    </interactant>
    <interactant intactId="EBI-520756">
        <id>O15304</id>
        <label>SIVA1</label>
    </interactant>
    <organismsDiffer>false</organismsDiffer>
    <experiments>2</experiments>
</comment>
<comment type="interaction">
    <interactant intactId="EBI-287195">
        <id>Q07817-1</id>
    </interactant>
    <interactant intactId="EBI-520766">
        <id>O15304-1</id>
        <label>SIVA1</label>
    </interactant>
    <organismsDiffer>false</organismsDiffer>
    <experiments>5</experiments>
</comment>
<comment type="interaction">
    <interactant intactId="EBI-287195">
        <id>Q07817-1</id>
    </interactant>
    <interactant intactId="EBI-366083">
        <id>P04637</id>
        <label>TP53</label>
    </interactant>
    <organismsDiffer>false</organismsDiffer>
    <experiments>26</experiments>
</comment>
<comment type="interaction">
    <interactant intactId="EBI-287195">
        <id>Q07817-1</id>
    </interactant>
    <interactant intactId="EBI-77642">
        <id>Q13625</id>
        <label>TP53BP2</label>
    </interactant>
    <organismsDiffer>false</organismsDiffer>
    <experiments>3</experiments>
</comment>
<comment type="interaction">
    <interactant intactId="EBI-287195">
        <id>Q07817-1</id>
    </interactant>
    <interactant intactId="EBI-1207633">
        <id>Q86Y07-1</id>
        <label>VRK2</label>
    </interactant>
    <organismsDiffer>false</organismsDiffer>
    <experiments>2</experiments>
</comment>
<comment type="interaction">
    <interactant intactId="EBI-287195">
        <id>Q07817-1</id>
    </interactant>
    <interactant intactId="EBI-400328">
        <id>Q61337</id>
        <label>Bad</label>
    </interactant>
    <organismsDiffer>true</organismsDiffer>
    <experiments>3</experiments>
</comment>
<comment type="interaction">
    <interactant intactId="EBI-287195">
        <id>Q07817-1</id>
    </interactant>
    <interactant intactId="EBI-727801">
        <id>Q99ML1</id>
        <label>Bbc3</label>
    </interactant>
    <organismsDiffer>true</organismsDiffer>
    <experiments>3</experiments>
</comment>
<comment type="interaction">
    <interactant intactId="EBI-287195">
        <id>Q07817-1</id>
    </interactant>
    <interactant intactId="EBI-526084">
        <id>O54918-3</id>
        <label>Bcl2l11</label>
    </interactant>
    <organismsDiffer>true</organismsDiffer>
    <experiments>3</experiments>
</comment>
<comment type="interaction">
    <interactant intactId="EBI-287195">
        <id>Q07817-1</id>
    </interactant>
    <interactant intactId="EBI-536271">
        <id>P30429-2</id>
        <label>ced-4</label>
    </interactant>
    <organismsDiffer>true</organismsDiffer>
    <experiments>2</experiments>
</comment>
<comment type="interaction">
    <interactant intactId="EBI-287195">
        <id>Q07817-1</id>
    </interactant>
    <interactant intactId="EBI-15572304">
        <id>Q99MI6</id>
        <label>Gimap3</label>
    </interactant>
    <organismsDiffer>true</organismsDiffer>
    <experiments>3</experiments>
</comment>
<comment type="interaction">
    <interactant intactId="EBI-287195">
        <id>Q07817-1</id>
    </interactant>
    <interactant intactId="EBI-15572348">
        <id>Q8BWF2</id>
        <label>Gimap5</label>
    </interactant>
    <organismsDiffer>true</organismsDiffer>
    <experiments>3</experiments>
</comment>
<comment type="interaction">
    <interactant intactId="EBI-287195">
        <id>Q07817-1</id>
    </interactant>
    <interactant intactId="EBI-474016">
        <id>P02340</id>
        <label>Tp53</label>
    </interactant>
    <organismsDiffer>true</organismsDiffer>
    <experiments>3</experiments>
</comment>
<comment type="subcellular location">
    <molecule>Isoform Bcl-X(L)</molecule>
    <subcellularLocation>
        <location evidence="1">Mitochondrion inner membrane</location>
    </subcellularLocation>
    <subcellularLocation>
        <location evidence="1">Mitochondrion outer membrane</location>
    </subcellularLocation>
    <subcellularLocation>
        <location evidence="1">Mitochondrion matrix</location>
    </subcellularLocation>
    <subcellularLocation>
        <location evidence="1">Cytoplasmic vesicle</location>
        <location evidence="1">Secretory vesicle</location>
        <location evidence="1">Synaptic vesicle membrane</location>
    </subcellularLocation>
    <subcellularLocation>
        <location evidence="1">Cytoplasm</location>
        <location evidence="1">Cytosol</location>
    </subcellularLocation>
    <subcellularLocation>
        <location>Cytoplasm</location>
        <location>Cytoskeleton</location>
        <location>Microtubule organizing center</location>
        <location>Centrosome</location>
    </subcellularLocation>
    <subcellularLocation>
        <location evidence="1">Nucleus membrane</location>
        <topology evidence="1">Single-pass membrane protein</topology>
        <orientation evidence="1">Cytoplasmic side</orientation>
    </subcellularLocation>
    <text evidence="1">After neuronal stimulation, translocates from cytosol to synaptic vesicle and mitochondrion membrane in a calmodulin-dependent manner (By similarity). Localizes to the centrosome when phosphorylated at Ser-49.</text>
</comment>
<comment type="alternative products">
    <event type="alternative splicing"/>
    <isoform>
        <id>Q07817-1</id>
        <name>Bcl-X(L)</name>
        <name>Bcl-xL</name>
        <sequence type="displayed"/>
    </isoform>
    <isoform>
        <id>Q07817-2</id>
        <name>Bcl-X(S)</name>
        <name>Bcl-xS</name>
        <sequence type="described" ref="VSP_000515"/>
    </isoform>
    <isoform>
        <id>Q07817-3</id>
        <name>Bcl-X(beta)</name>
        <sequence type="described" ref="VSP_000516"/>
    </isoform>
</comment>
<comment type="tissue specificity">
    <text>Bcl-X(S) is expressed at high levels in cells that undergo a high rate of turnover, such as developing lymphocytes. In contrast, Bcl-X(L) is found in tissues containing long-lived postmitotic cells, such as adult brain.</text>
</comment>
<comment type="domain">
    <text>The BH4 motif is required for anti-apoptotic activity. The BH1 and BH2 motifs are required for both heterodimerization with other Bcl-2 family members and for repression of cell death.</text>
</comment>
<comment type="domain">
    <text evidence="14">The loop between motifs BH4 and BH3 is required for the interaction with NLRP1.</text>
</comment>
<comment type="PTM">
    <text evidence="28">Proteolytically cleaved by caspases during apoptosis. The cleaved protein, lacking the BH4 motif, has pro-apoptotic activity.</text>
</comment>
<comment type="PTM">
    <text evidence="15 18">Phosphorylated on Ser-62 by CDK1. This phosphorylation is partial in normal mitotic cells, but complete in G2-arrested cells upon DNA-damage, thus promoting subsequent apoptosis probably by triggering caspases-mediated proteolysis. Phosphorylated by PLK3, leading to regulate the G2 checkpoint and progression to cytokinesis during mitosis. Phosphorylation at Ser-49 appears during the S phase and G2, disappears rapidly in early mitosis during prometaphase, metaphase and early anaphase, and re-appears during telophase and cytokinesis.</text>
</comment>
<comment type="PTM">
    <text evidence="25">Ubiquitinated by RNF183 during prolonged ER stress, leading to degradation by the proteosome.</text>
</comment>
<comment type="similarity">
    <text evidence="30">Belongs to the Bcl-2 family.</text>
</comment>
<comment type="online information" name="Atlas of Genetics and Cytogenetics in Oncology and Haematology">
    <link uri="https://atlasgeneticsoncology.org/gene/129/BCL2L1"/>
</comment>
<keyword id="KW-0002">3D-structure</keyword>
<keyword id="KW-0025">Alternative splicing</keyword>
<keyword id="KW-0053">Apoptosis</keyword>
<keyword id="KW-0963">Cytoplasm</keyword>
<keyword id="KW-0968">Cytoplasmic vesicle</keyword>
<keyword id="KW-0206">Cytoskeleton</keyword>
<keyword id="KW-0254">Endocytosis</keyword>
<keyword id="KW-0472">Membrane</keyword>
<keyword id="KW-0496">Mitochondrion</keyword>
<keyword id="KW-0999">Mitochondrion inner membrane</keyword>
<keyword id="KW-1000">Mitochondrion outer membrane</keyword>
<keyword id="KW-0539">Nucleus</keyword>
<keyword id="KW-0597">Phosphoprotein</keyword>
<keyword id="KW-1267">Proteomics identification</keyword>
<keyword id="KW-1185">Reference proteome</keyword>
<keyword id="KW-0770">Synapse</keyword>
<keyword id="KW-0812">Transmembrane</keyword>
<keyword id="KW-1133">Transmembrane helix</keyword>
<keyword id="KW-0832">Ubl conjugation</keyword>
<feature type="chain" id="PRO_0000143062" description="Bcl-2-like protein 1">
    <location>
        <begin position="1"/>
        <end position="233"/>
    </location>
</feature>
<feature type="transmembrane region" description="Helical" evidence="4">
    <location>
        <begin position="210"/>
        <end position="226"/>
    </location>
</feature>
<feature type="region of interest" description="Disordered" evidence="5">
    <location>
        <begin position="28"/>
        <end position="71"/>
    </location>
</feature>
<feature type="short sequence motif" description="BH4">
    <location>
        <begin position="4"/>
        <end position="24"/>
    </location>
</feature>
<feature type="short sequence motif" description="BH3">
    <location>
        <begin position="86"/>
        <end position="100"/>
    </location>
</feature>
<feature type="short sequence motif" description="BH1">
    <location>
        <begin position="129"/>
        <end position="148"/>
    </location>
</feature>
<feature type="short sequence motif" description="BH2">
    <location>
        <begin position="180"/>
        <end position="195"/>
    </location>
</feature>
<feature type="site" description="Cleavage; by caspase-1">
    <location>
        <begin position="61"/>
        <end position="62"/>
    </location>
</feature>
<feature type="modified residue" description="Phosphoserine; by PLK3" evidence="18">
    <location>
        <position position="49"/>
    </location>
</feature>
<feature type="modified residue" description="Phosphoserine; by CDK1" evidence="15">
    <location>
        <position position="62"/>
    </location>
</feature>
<feature type="splice variant" id="VSP_000515" description="In isoform Bcl-X(S)." evidence="30">
    <location>
        <begin position="126"/>
        <end position="188"/>
    </location>
</feature>
<feature type="splice variant" id="VSP_000516" description="In isoform Bcl-X(beta)." evidence="30">
    <original>DTFVELYGNNAAAESRKGQERFNRWFLTGMTVAGVVLLGSLFSRK</original>
    <variation>VRTKPLVCPFSLASGQRSPTALLLYLFLLCWVIVGDVDS</variation>
    <location>
        <begin position="189"/>
        <end position="233"/>
    </location>
</feature>
<feature type="mutagenesis site" description="Less stable at G2 checkpoint after DNA damage." evidence="18">
    <original>S</original>
    <variation>A</variation>
    <location>
        <position position="49"/>
    </location>
</feature>
<feature type="mutagenesis site" description="No cleavage by caspase-1 nor by caspase-3." evidence="28">
    <original>D</original>
    <variation>A</variation>
    <location>
        <position position="61"/>
    </location>
</feature>
<feature type="mutagenesis site" description="No heterodimerization with BAX." evidence="27">
    <original>FRD</original>
    <variation>VRA</variation>
    <location>
        <begin position="131"/>
        <end position="133"/>
    </location>
</feature>
<feature type="mutagenesis site" description="Loss of anti-apoptotic activity." evidence="27">
    <original>VNW</original>
    <variation>AIL</variation>
    <location>
        <begin position="135"/>
        <end position="137"/>
    </location>
</feature>
<feature type="mutagenesis site" description="Loss of anti-apoptotic activity." evidence="27">
    <original>GRI</original>
    <variation>ELN</variation>
    <location>
        <begin position="138"/>
        <end position="140"/>
    </location>
</feature>
<feature type="mutagenesis site" description="No heterodimerization with BAX." evidence="26">
    <original>G</original>
    <variation>A</variation>
    <location>
        <position position="138"/>
    </location>
</feature>
<feature type="mutagenesis site" description="Decreases interaction with DNM1L, no effect on endocytosis enhancement." evidence="22">
    <original>SFG</original>
    <variation>YCC</variation>
    <location>
        <begin position="145"/>
        <end position="147"/>
    </location>
</feature>
<feature type="mutagenesis site" description="No heterodimerization with BAX." evidence="27">
    <original>G</original>
    <variation>E</variation>
    <location>
        <position position="148"/>
    </location>
</feature>
<feature type="mutagenesis site" description="No effect on caspase-1 cleavage." evidence="27">
    <original>D</original>
    <variation>A</variation>
    <location>
        <position position="156"/>
    </location>
</feature>
<feature type="mutagenesis site" description="No effect on caspase-1 cleavage." evidence="27">
    <original>D</original>
    <variation>A</variation>
    <location>
        <position position="176"/>
    </location>
</feature>
<feature type="mutagenesis site" description="Abolishes interaction with DNM1L and endocytosis enhancement." evidence="22">
    <original>WDTF</original>
    <variation>SVTC</variation>
    <location>
        <begin position="188"/>
        <end position="191"/>
    </location>
</feature>
<feature type="mutagenesis site" description="Reduces anti-apoptotic activity by about half." evidence="27">
    <original>WD</original>
    <variation>GA</variation>
    <location>
        <begin position="188"/>
        <end position="189"/>
    </location>
</feature>
<feature type="mutagenesis site" description="No effect on caspase-1 cleavage." evidence="27">
    <original>D</original>
    <variation>A</variation>
    <location>
        <position position="189"/>
    </location>
</feature>
<feature type="sequence conflict" description="In Ref. 1; CAA80661." evidence="30" ref="1">
    <original>G</original>
    <variation>A</variation>
    <location>
        <position position="70"/>
    </location>
</feature>
<feature type="sequence conflict" description="In Ref. 4; CAI56777." evidence="30" ref="4">
    <original>A</original>
    <variation>V</variation>
    <location>
        <position position="168"/>
    </location>
</feature>
<feature type="helix" evidence="40">
    <location>
        <begin position="1"/>
        <end position="19"/>
    </location>
</feature>
<feature type="helix" evidence="35">
    <location>
        <begin position="24"/>
        <end position="26"/>
    </location>
</feature>
<feature type="strand" evidence="31">
    <location>
        <begin position="29"/>
        <end position="36"/>
    </location>
</feature>
<feature type="helix" evidence="42">
    <location>
        <begin position="40"/>
        <end position="44"/>
    </location>
</feature>
<feature type="strand" evidence="34">
    <location>
        <begin position="50"/>
        <end position="53"/>
    </location>
</feature>
<feature type="strand" evidence="33">
    <location>
        <begin position="56"/>
        <end position="59"/>
    </location>
</feature>
<feature type="strand" evidence="38">
    <location>
        <begin position="60"/>
        <end position="64"/>
    </location>
</feature>
<feature type="turn" evidence="31">
    <location>
        <begin position="65"/>
        <end position="68"/>
    </location>
</feature>
<feature type="turn" evidence="31">
    <location>
        <begin position="70"/>
        <end position="73"/>
    </location>
</feature>
<feature type="helix" evidence="40">
    <location>
        <begin position="83"/>
        <end position="100"/>
    </location>
</feature>
<feature type="helix" evidence="40">
    <location>
        <begin position="102"/>
        <end position="104"/>
    </location>
</feature>
<feature type="helix" evidence="40">
    <location>
        <begin position="108"/>
        <end position="111"/>
    </location>
</feature>
<feature type="turn" evidence="33">
    <location>
        <begin position="112"/>
        <end position="114"/>
    </location>
</feature>
<feature type="turn" evidence="37">
    <location>
        <begin position="116"/>
        <end position="118"/>
    </location>
</feature>
<feature type="helix" evidence="40">
    <location>
        <begin position="120"/>
        <end position="130"/>
    </location>
</feature>
<feature type="turn" evidence="40">
    <location>
        <begin position="131"/>
        <end position="133"/>
    </location>
</feature>
<feature type="helix" evidence="40">
    <location>
        <begin position="137"/>
        <end position="156"/>
    </location>
</feature>
<feature type="helix" evidence="40">
    <location>
        <begin position="160"/>
        <end position="162"/>
    </location>
</feature>
<feature type="helix" evidence="40">
    <location>
        <begin position="163"/>
        <end position="177"/>
    </location>
</feature>
<feature type="helix" evidence="40">
    <location>
        <begin position="179"/>
        <end position="184"/>
    </location>
</feature>
<feature type="helix" evidence="40">
    <location>
        <begin position="187"/>
        <end position="195"/>
    </location>
</feature>
<feature type="turn" evidence="36">
    <location>
        <begin position="196"/>
        <end position="198"/>
    </location>
</feature>
<feature type="helix" evidence="41">
    <location>
        <begin position="199"/>
        <end position="204"/>
    </location>
</feature>
<feature type="strand" evidence="32">
    <location>
        <begin position="206"/>
        <end position="208"/>
    </location>
</feature>
<feature type="helix" evidence="39">
    <location>
        <begin position="213"/>
        <end position="229"/>
    </location>
</feature>
<dbReference type="EMBL" id="Z23115">
    <property type="protein sequence ID" value="CAA80661.1"/>
    <property type="molecule type" value="mRNA"/>
</dbReference>
<dbReference type="EMBL" id="Z23116">
    <property type="protein sequence ID" value="CAA80662.1"/>
    <property type="molecule type" value="mRNA"/>
</dbReference>
<dbReference type="EMBL" id="U72398">
    <property type="protein sequence ID" value="AAB17354.1"/>
    <property type="molecule type" value="Genomic_DNA"/>
</dbReference>
<dbReference type="EMBL" id="CR936637">
    <property type="protein sequence ID" value="CAI56777.1"/>
    <property type="molecule type" value="mRNA"/>
</dbReference>
<dbReference type="EMBL" id="BT007208">
    <property type="protein sequence ID" value="AAP35872.1"/>
    <property type="molecule type" value="mRNA"/>
</dbReference>
<dbReference type="EMBL" id="AL117381">
    <property type="status" value="NOT_ANNOTATED_CDS"/>
    <property type="molecule type" value="Genomic_DNA"/>
</dbReference>
<dbReference type="EMBL" id="AL160175">
    <property type="status" value="NOT_ANNOTATED_CDS"/>
    <property type="molecule type" value="Genomic_DNA"/>
</dbReference>
<dbReference type="EMBL" id="CH471077">
    <property type="protein sequence ID" value="EAW76424.1"/>
    <property type="molecule type" value="Genomic_DNA"/>
</dbReference>
<dbReference type="EMBL" id="CH471077">
    <property type="protein sequence ID" value="EAW76425.1"/>
    <property type="molecule type" value="Genomic_DNA"/>
</dbReference>
<dbReference type="EMBL" id="CH471077">
    <property type="protein sequence ID" value="EAW76429.1"/>
    <property type="molecule type" value="Genomic_DNA"/>
</dbReference>
<dbReference type="EMBL" id="BC019307">
    <property type="protein sequence ID" value="AAH19307.1"/>
    <property type="molecule type" value="mRNA"/>
</dbReference>
<dbReference type="CCDS" id="CCDS13188.1">
    <molecule id="Q07817-2"/>
</dbReference>
<dbReference type="CCDS" id="CCDS13189.1">
    <molecule id="Q07817-1"/>
</dbReference>
<dbReference type="PIR" id="B47537">
    <property type="entry name" value="B47537"/>
</dbReference>
<dbReference type="PIR" id="JE0203">
    <property type="entry name" value="JE0203"/>
</dbReference>
<dbReference type="RefSeq" id="NP_001182.1">
    <molecule id="Q07817-2"/>
    <property type="nucleotide sequence ID" value="NM_001191.4"/>
</dbReference>
<dbReference type="RefSeq" id="NP_001304848.1">
    <molecule id="Q07817-1"/>
    <property type="nucleotide sequence ID" value="NM_001317919.2"/>
</dbReference>
<dbReference type="RefSeq" id="NP_001304849.1">
    <molecule id="Q07817-1"/>
    <property type="nucleotide sequence ID" value="NM_001317920.2"/>
</dbReference>
<dbReference type="RefSeq" id="NP_001304850.1">
    <molecule id="Q07817-1"/>
    <property type="nucleotide sequence ID" value="NM_001317921.2"/>
</dbReference>
<dbReference type="RefSeq" id="NP_001309168.1">
    <molecule id="Q07817-1"/>
    <property type="nucleotide sequence ID" value="NM_001322239.2"/>
</dbReference>
<dbReference type="RefSeq" id="NP_001309169.1">
    <molecule id="Q07817-1"/>
    <property type="nucleotide sequence ID" value="NM_001322240.2"/>
</dbReference>
<dbReference type="RefSeq" id="NP_001309171.1">
    <molecule id="Q07817-1"/>
    <property type="nucleotide sequence ID" value="NM_001322242.2"/>
</dbReference>
<dbReference type="RefSeq" id="NP_001411260.1">
    <molecule id="Q07817-1"/>
    <property type="nucleotide sequence ID" value="NM_001424331.1"/>
</dbReference>
<dbReference type="RefSeq" id="NP_001411261.1">
    <molecule id="Q07817-1"/>
    <property type="nucleotide sequence ID" value="NM_001424332.1"/>
</dbReference>
<dbReference type="RefSeq" id="NP_612815.1">
    <molecule id="Q07817-1"/>
    <property type="nucleotide sequence ID" value="NM_138578.3"/>
</dbReference>
<dbReference type="RefSeq" id="XP_011527266.1">
    <property type="nucleotide sequence ID" value="XM_011528964.2"/>
</dbReference>
<dbReference type="RefSeq" id="XP_016883482.1">
    <property type="nucleotide sequence ID" value="XM_017027993.1"/>
</dbReference>
<dbReference type="PDB" id="1BXL">
    <property type="method" value="NMR"/>
    <property type="chains" value="A=1-209"/>
</dbReference>
<dbReference type="PDB" id="1G5J">
    <property type="method" value="NMR"/>
    <property type="chains" value="A=1-209"/>
</dbReference>
<dbReference type="PDB" id="1LXL">
    <property type="method" value="NMR"/>
    <property type="chains" value="A=1-209"/>
</dbReference>
<dbReference type="PDB" id="1MAZ">
    <property type="method" value="X-ray"/>
    <property type="resolution" value="2.20 A"/>
    <property type="chains" value="A=1-209"/>
</dbReference>
<dbReference type="PDB" id="1R2D">
    <property type="method" value="X-ray"/>
    <property type="resolution" value="1.95 A"/>
    <property type="chains" value="A=1-211"/>
</dbReference>
<dbReference type="PDB" id="1R2E">
    <property type="method" value="X-ray"/>
    <property type="resolution" value="2.10 A"/>
    <property type="chains" value="A=1-211"/>
</dbReference>
<dbReference type="PDB" id="1R2G">
    <property type="method" value="X-ray"/>
    <property type="resolution" value="2.70 A"/>
    <property type="chains" value="A=1-211"/>
</dbReference>
<dbReference type="PDB" id="1R2H">
    <property type="method" value="X-ray"/>
    <property type="resolution" value="2.20 A"/>
    <property type="chains" value="A=1-211"/>
</dbReference>
<dbReference type="PDB" id="1R2I">
    <property type="method" value="X-ray"/>
    <property type="resolution" value="2.00 A"/>
    <property type="chains" value="A=1-211"/>
</dbReference>
<dbReference type="PDB" id="1YSG">
    <property type="method" value="NMR"/>
    <property type="chains" value="A=1-209"/>
</dbReference>
<dbReference type="PDB" id="1YSI">
    <property type="method" value="NMR"/>
    <property type="chains" value="A=1-209"/>
</dbReference>
<dbReference type="PDB" id="1YSN">
    <property type="method" value="NMR"/>
    <property type="chains" value="A=1-209"/>
</dbReference>
<dbReference type="PDB" id="2B48">
    <property type="method" value="X-ray"/>
    <property type="resolution" value="3.45 A"/>
    <property type="chains" value="A=1-211"/>
</dbReference>
<dbReference type="PDB" id="2LP8">
    <property type="method" value="NMR"/>
    <property type="chains" value="A=1-209"/>
</dbReference>
<dbReference type="PDB" id="2LPC">
    <property type="method" value="NMR"/>
    <property type="chains" value="A=1-209"/>
</dbReference>
<dbReference type="PDB" id="2M03">
    <property type="method" value="NMR"/>
    <property type="chains" value="A=1-209"/>
</dbReference>
<dbReference type="PDB" id="2M04">
    <property type="method" value="NMR"/>
    <property type="chains" value="A=1-209"/>
</dbReference>
<dbReference type="PDB" id="2ME8">
    <property type="method" value="NMR"/>
    <property type="chains" value="A=1-209"/>
</dbReference>
<dbReference type="PDB" id="2ME9">
    <property type="method" value="NMR"/>
    <property type="chains" value="A=1-209"/>
</dbReference>
<dbReference type="PDB" id="2MEJ">
    <property type="method" value="NMR"/>
    <property type="chains" value="A=1-209"/>
</dbReference>
<dbReference type="PDB" id="2O1Y">
    <property type="method" value="NMR"/>
    <property type="chains" value="A=1-209"/>
</dbReference>
<dbReference type="PDB" id="2O2M">
    <property type="method" value="NMR"/>
    <property type="chains" value="A=2-20, A=83-196"/>
</dbReference>
<dbReference type="PDB" id="2O2N">
    <property type="method" value="NMR"/>
    <property type="chains" value="A=2-20, A=83-196"/>
</dbReference>
<dbReference type="PDB" id="2P1L">
    <property type="method" value="X-ray"/>
    <property type="resolution" value="2.50 A"/>
    <property type="chains" value="A/C/E/G=1-209"/>
</dbReference>
<dbReference type="PDB" id="2PON">
    <property type="method" value="NMR"/>
    <property type="chains" value="B=1-196"/>
</dbReference>
<dbReference type="PDB" id="2YJ1">
    <property type="method" value="X-ray"/>
    <property type="resolution" value="2.24 A"/>
    <property type="chains" value="A/C=1-209"/>
</dbReference>
<dbReference type="PDB" id="2YQ6">
    <property type="method" value="X-ray"/>
    <property type="resolution" value="1.80 A"/>
    <property type="chains" value="A=1-209"/>
</dbReference>
<dbReference type="PDB" id="2YQ7">
    <property type="method" value="X-ray"/>
    <property type="resolution" value="1.90 A"/>
    <property type="chains" value="A=1-209"/>
</dbReference>
<dbReference type="PDB" id="2YXJ">
    <property type="method" value="X-ray"/>
    <property type="resolution" value="2.20 A"/>
    <property type="chains" value="A/B=1-209"/>
</dbReference>
<dbReference type="PDB" id="3CVA">
    <property type="method" value="X-ray"/>
    <property type="resolution" value="2.70 A"/>
    <property type="chains" value="X=1-211"/>
</dbReference>
<dbReference type="PDB" id="3FDL">
    <property type="method" value="X-ray"/>
    <property type="resolution" value="1.78 A"/>
    <property type="chains" value="A=1-209"/>
</dbReference>
<dbReference type="PDB" id="3FDM">
    <property type="method" value="X-ray"/>
    <property type="resolution" value="2.26 A"/>
    <property type="chains" value="A/B/C=1-209"/>
</dbReference>
<dbReference type="PDB" id="3INQ">
    <property type="method" value="X-ray"/>
    <property type="resolution" value="2.00 A"/>
    <property type="chains" value="A/B=1-209"/>
</dbReference>
<dbReference type="PDB" id="3IO8">
    <property type="method" value="X-ray"/>
    <property type="resolution" value="2.30 A"/>
    <property type="chains" value="A/C=1-209"/>
</dbReference>
<dbReference type="PDB" id="3PL7">
    <property type="method" value="X-ray"/>
    <property type="resolution" value="2.61 A"/>
    <property type="chains" value="A/B=1-209"/>
</dbReference>
<dbReference type="PDB" id="3QKD">
    <property type="method" value="X-ray"/>
    <property type="resolution" value="2.02 A"/>
    <property type="chains" value="A/B=1-209"/>
</dbReference>
<dbReference type="PDB" id="3R85">
    <property type="method" value="X-ray"/>
    <property type="resolution" value="1.95 A"/>
    <property type="chains" value="A/B/C/D=1-197"/>
</dbReference>
<dbReference type="PDB" id="3SP7">
    <property type="method" value="X-ray"/>
    <property type="resolution" value="1.40 A"/>
    <property type="chains" value="A=1-209"/>
</dbReference>
<dbReference type="PDB" id="3SPF">
    <property type="method" value="X-ray"/>
    <property type="resolution" value="1.70 A"/>
    <property type="chains" value="A=1-209"/>
</dbReference>
<dbReference type="PDB" id="3WIZ">
    <property type="method" value="X-ray"/>
    <property type="resolution" value="2.45 A"/>
    <property type="chains" value="A/B=1-209"/>
</dbReference>
<dbReference type="PDB" id="3ZK6">
    <property type="method" value="X-ray"/>
    <property type="resolution" value="2.48 A"/>
    <property type="chains" value="A/B=1-209"/>
</dbReference>
<dbReference type="PDB" id="3ZLN">
    <property type="method" value="X-ray"/>
    <property type="resolution" value="2.29 A"/>
    <property type="chains" value="A=1-209"/>
</dbReference>
<dbReference type="PDB" id="3ZLO">
    <property type="method" value="X-ray"/>
    <property type="resolution" value="2.60 A"/>
    <property type="chains" value="A=1-209"/>
</dbReference>
<dbReference type="PDB" id="3ZLR">
    <property type="method" value="X-ray"/>
    <property type="resolution" value="2.03 A"/>
    <property type="chains" value="A/B=1-209"/>
</dbReference>
<dbReference type="PDB" id="4A1U">
    <property type="method" value="X-ray"/>
    <property type="resolution" value="1.54 A"/>
    <property type="chains" value="A=1-209"/>
</dbReference>
<dbReference type="PDB" id="4A1W">
    <property type="method" value="X-ray"/>
    <property type="resolution" value="2.50 A"/>
    <property type="chains" value="A/B/C/D=1-209"/>
</dbReference>
<dbReference type="PDB" id="4AQ3">
    <property type="method" value="X-ray"/>
    <property type="resolution" value="2.40 A"/>
    <property type="chains" value="A/B/C/D/E/F=29-44"/>
</dbReference>
<dbReference type="PDB" id="4BPK">
    <property type="method" value="X-ray"/>
    <property type="resolution" value="1.76 A"/>
    <property type="chains" value="A/B=1-209"/>
</dbReference>
<dbReference type="PDB" id="4C52">
    <property type="method" value="X-ray"/>
    <property type="resolution" value="2.05 A"/>
    <property type="chains" value="A/B=1-209"/>
</dbReference>
<dbReference type="PDB" id="4C5D">
    <property type="method" value="X-ray"/>
    <property type="resolution" value="2.30 A"/>
    <property type="chains" value="A/B=1-209"/>
</dbReference>
<dbReference type="PDB" id="4CIN">
    <property type="method" value="X-ray"/>
    <property type="resolution" value="2.69 A"/>
    <property type="chains" value="A/B=1-209, C/D=79-102"/>
</dbReference>
<dbReference type="PDB" id="4EHR">
    <property type="method" value="X-ray"/>
    <property type="resolution" value="2.09 A"/>
    <property type="chains" value="A=1-209"/>
</dbReference>
<dbReference type="PDB" id="4HNJ">
    <property type="method" value="X-ray"/>
    <property type="resolution" value="2.90 A"/>
    <property type="chains" value="A/B=1-209"/>
</dbReference>
<dbReference type="PDB" id="4IEH">
    <property type="method" value="X-ray"/>
    <property type="resolution" value="2.10 A"/>
    <property type="chains" value="A=29-44"/>
</dbReference>
<dbReference type="PDB" id="4PPI">
    <property type="method" value="X-ray"/>
    <property type="resolution" value="2.85 A"/>
    <property type="chains" value="A=1-209"/>
</dbReference>
<dbReference type="PDB" id="4QVE">
    <property type="method" value="X-ray"/>
    <property type="resolution" value="2.05 A"/>
    <property type="chains" value="A=1-209"/>
</dbReference>
<dbReference type="PDB" id="4QVF">
    <property type="method" value="X-ray"/>
    <property type="resolution" value="1.53 A"/>
    <property type="chains" value="A=1-209"/>
</dbReference>
<dbReference type="PDB" id="4QVX">
    <property type="method" value="X-ray"/>
    <property type="resolution" value="2.10 A"/>
    <property type="chains" value="A/B=1-23, A/B=83-209"/>
</dbReference>
<dbReference type="PDB" id="4TUH">
    <property type="method" value="X-ray"/>
    <property type="resolution" value="1.80 A"/>
    <property type="chains" value="A/B/C/D/E/F/G/H=1-209"/>
</dbReference>
<dbReference type="PDB" id="4Z9V">
    <property type="method" value="X-ray"/>
    <property type="resolution" value="2.10 A"/>
    <property type="chains" value="A/B=1-208"/>
</dbReference>
<dbReference type="PDB" id="5AGW">
    <property type="method" value="X-ray"/>
    <property type="resolution" value="2.69 A"/>
    <property type="chains" value="A/B=29-44"/>
</dbReference>
<dbReference type="PDB" id="5AGX">
    <property type="method" value="X-ray"/>
    <property type="resolution" value="2.24 A"/>
    <property type="chains" value="A/B=29-44"/>
</dbReference>
<dbReference type="PDB" id="5B1Z">
    <property type="method" value="X-ray"/>
    <property type="resolution" value="2.15 A"/>
    <property type="chains" value="A/B=1-209"/>
</dbReference>
<dbReference type="PDB" id="5C3G">
    <property type="method" value="X-ray"/>
    <property type="resolution" value="2.45 A"/>
    <property type="chains" value="A=83-209"/>
</dbReference>
<dbReference type="PDB" id="5FMJ">
    <property type="method" value="X-ray"/>
    <property type="resolution" value="2.43 A"/>
    <property type="chains" value="A=1-209"/>
</dbReference>
<dbReference type="PDB" id="5FMK">
    <property type="method" value="X-ray"/>
    <property type="resolution" value="1.73 A"/>
    <property type="chains" value="A=1-209"/>
</dbReference>
<dbReference type="PDB" id="5VAY">
    <property type="method" value="X-ray"/>
    <property type="resolution" value="1.80 A"/>
    <property type="chains" value="A/B/C/D=29-44"/>
</dbReference>
<dbReference type="PDB" id="5VX3">
    <property type="method" value="X-ray"/>
    <property type="resolution" value="1.95 A"/>
    <property type="chains" value="A/C/E/G=1-209"/>
</dbReference>
<dbReference type="PDB" id="6BF2">
    <property type="method" value="NMR"/>
    <property type="chains" value="A=1-209"/>
</dbReference>
<dbReference type="PDB" id="6DCN">
    <property type="method" value="X-ray"/>
    <property type="resolution" value="2.44 A"/>
    <property type="chains" value="A/B=1-26, A/B=83-208"/>
</dbReference>
<dbReference type="PDB" id="6DCO">
    <property type="method" value="X-ray"/>
    <property type="resolution" value="2.20 A"/>
    <property type="chains" value="A/B=1-26, A/B=83-208"/>
</dbReference>
<dbReference type="PDB" id="6F46">
    <property type="method" value="NMR"/>
    <property type="chains" value="A=202-233"/>
</dbReference>
<dbReference type="PDB" id="6HJL">
    <property type="method" value="X-ray"/>
    <property type="resolution" value="2.20 A"/>
    <property type="chains" value="A=83-197, B/E/F=83-195"/>
</dbReference>
<dbReference type="PDB" id="6IJQ">
    <property type="method" value="NMR"/>
    <property type="chains" value="B=1-209"/>
</dbReference>
<dbReference type="PDB" id="6LHD">
    <property type="method" value="X-ray"/>
    <property type="resolution" value="2.50 A"/>
    <property type="chains" value="A/B=2-201"/>
</dbReference>
<dbReference type="PDB" id="6O0K">
    <property type="method" value="X-ray"/>
    <property type="resolution" value="1.62 A"/>
    <property type="chains" value="A=29-44"/>
</dbReference>
<dbReference type="PDB" id="6O0L">
    <property type="method" value="X-ray"/>
    <property type="resolution" value="2.20 A"/>
    <property type="chains" value="A/C=29-44"/>
</dbReference>
<dbReference type="PDB" id="6O0M">
    <property type="method" value="X-ray"/>
    <property type="resolution" value="1.75 A"/>
    <property type="chains" value="A=29-44"/>
</dbReference>
<dbReference type="PDB" id="6O0O">
    <property type="method" value="X-ray"/>
    <property type="resolution" value="2.00 A"/>
    <property type="chains" value="A/C=29-44"/>
</dbReference>
<dbReference type="PDB" id="6O0P">
    <property type="method" value="X-ray"/>
    <property type="resolution" value="1.80 A"/>
    <property type="chains" value="A=29-44"/>
</dbReference>
<dbReference type="PDB" id="6RNU">
    <property type="method" value="X-ray"/>
    <property type="resolution" value="2.40 A"/>
    <property type="chains" value="A/B=1-209"/>
</dbReference>
<dbReference type="PDB" id="6ST2">
    <property type="method" value="X-ray"/>
    <property type="resolution" value="1.79 A"/>
    <property type="chains" value="A/B=1-209"/>
</dbReference>
<dbReference type="PDB" id="6UVC">
    <property type="method" value="X-ray"/>
    <property type="resolution" value="1.90 A"/>
    <property type="chains" value="A/B=1-209"/>
</dbReference>
<dbReference type="PDB" id="6UVD">
    <property type="method" value="X-ray"/>
    <property type="resolution" value="2.15 A"/>
    <property type="chains" value="A/B=1-209"/>
</dbReference>
<dbReference type="PDB" id="6UVE">
    <property type="method" value="X-ray"/>
    <property type="resolution" value="2.87 A"/>
    <property type="chains" value="A/B/C=1-209"/>
</dbReference>
<dbReference type="PDB" id="6UVF">
    <property type="method" value="X-ray"/>
    <property type="resolution" value="2.24 A"/>
    <property type="chains" value="A/B/C/D/E/F/G/H/I/J/K/L=1-209"/>
</dbReference>
<dbReference type="PDB" id="6UVG">
    <property type="method" value="X-ray"/>
    <property type="resolution" value="2.10 A"/>
    <property type="chains" value="A/B/C/D/E/F/G/H/I/J/K/L=1-209"/>
</dbReference>
<dbReference type="PDB" id="6UVH">
    <property type="method" value="X-ray"/>
    <property type="resolution" value="2.19 A"/>
    <property type="chains" value="A/B/C/D=1-209"/>
</dbReference>
<dbReference type="PDB" id="6VWC">
    <property type="method" value="X-ray"/>
    <property type="resolution" value="1.60 A"/>
    <property type="chains" value="A/B=1-25, A/B=83-209"/>
</dbReference>
<dbReference type="PDB" id="6X7I">
    <property type="method" value="Other"/>
    <property type="chains" value="A=206-233"/>
</dbReference>
<dbReference type="PDB" id="6YLI">
    <property type="method" value="X-ray"/>
    <property type="resolution" value="1.90 A"/>
    <property type="chains" value="A/C=1-209"/>
</dbReference>
<dbReference type="PDB" id="6ZHC">
    <property type="method" value="X-ray"/>
    <property type="resolution" value="1.92 A"/>
    <property type="chains" value="DDD=1-209"/>
</dbReference>
<dbReference type="PDB" id="7CA4">
    <property type="method" value="X-ray"/>
    <property type="resolution" value="2.70 A"/>
    <property type="chains" value="A=1-211"/>
</dbReference>
<dbReference type="PDB" id="7JGV">
    <property type="method" value="X-ray"/>
    <property type="resolution" value="2.05 A"/>
    <property type="chains" value="A/B=1-209"/>
</dbReference>
<dbReference type="PDB" id="7JGW">
    <property type="method" value="X-ray"/>
    <property type="resolution" value="1.30 A"/>
    <property type="chains" value="A=1-209"/>
</dbReference>
<dbReference type="PDB" id="7LH7">
    <property type="method" value="X-ray"/>
    <property type="resolution" value="1.41 A"/>
    <property type="chains" value="A/B=1-25, A/B=83-209"/>
</dbReference>
<dbReference type="PDB" id="7XGF">
    <property type="method" value="X-ray"/>
    <property type="resolution" value="1.90 A"/>
    <property type="chains" value="B/C/E/F=1-209"/>
</dbReference>
<dbReference type="PDB" id="7XGG">
    <property type="method" value="X-ray"/>
    <property type="resolution" value="1.90 A"/>
    <property type="chains" value="B/C/E/F=1-209"/>
</dbReference>
<dbReference type="PDB" id="7Y8D">
    <property type="method" value="X-ray"/>
    <property type="resolution" value="2.00 A"/>
    <property type="chains" value="A=1-196"/>
</dbReference>
<dbReference type="PDB" id="7YAA">
    <property type="method" value="X-ray"/>
    <property type="resolution" value="1.40 A"/>
    <property type="chains" value="A=1-196"/>
</dbReference>
<dbReference type="PDB" id="8FY0">
    <property type="method" value="X-ray"/>
    <property type="resolution" value="2.94 A"/>
    <property type="chains" value="D=1-212"/>
</dbReference>
<dbReference type="PDB" id="8IQK">
    <property type="method" value="X-ray"/>
    <property type="resolution" value="2.88 A"/>
    <property type="chains" value="A/C/E/G=1-209"/>
</dbReference>
<dbReference type="PDB" id="8IQL">
    <property type="method" value="X-ray"/>
    <property type="resolution" value="2.96 A"/>
    <property type="chains" value="A/C=29-44"/>
</dbReference>
<dbReference type="PDB" id="8U27">
    <property type="method" value="NMR"/>
    <property type="chains" value="A=29-44"/>
</dbReference>
<dbReference type="PDB" id="8VWX">
    <property type="method" value="X-ray"/>
    <property type="resolution" value="1.77 A"/>
    <property type="chains" value="A=29-44"/>
</dbReference>
<dbReference type="PDB" id="8VWZ">
    <property type="method" value="X-ray"/>
    <property type="resolution" value="2.33 A"/>
    <property type="chains" value="A=29-44"/>
</dbReference>
<dbReference type="PDB" id="8VXM">
    <property type="method" value="X-ray"/>
    <property type="resolution" value="2.10 A"/>
    <property type="chains" value="A=29-44"/>
</dbReference>
<dbReference type="PDB" id="8VXN">
    <property type="method" value="X-ray"/>
    <property type="resolution" value="2.09 A"/>
    <property type="chains" value="A=29-44"/>
</dbReference>
<dbReference type="PDB" id="8WLS">
    <property type="method" value="NMR"/>
    <property type="chains" value="A=1-196"/>
</dbReference>
<dbReference type="PDB" id="8XP5">
    <property type="method" value="X-ray"/>
    <property type="resolution" value="2.55 A"/>
    <property type="chains" value="A/B=2-201"/>
</dbReference>
<dbReference type="PDB" id="8ZEB">
    <property type="method" value="X-ray"/>
    <property type="resolution" value="1.95 A"/>
    <property type="chains" value="A/B=1-196"/>
</dbReference>
<dbReference type="PDB" id="9AQZ">
    <property type="method" value="X-ray"/>
    <property type="resolution" value="1.96 A"/>
    <property type="chains" value="A=1-25, A=83-209"/>
</dbReference>
<dbReference type="PDBsum" id="1BXL"/>
<dbReference type="PDBsum" id="1G5J"/>
<dbReference type="PDBsum" id="1LXL"/>
<dbReference type="PDBsum" id="1MAZ"/>
<dbReference type="PDBsum" id="1R2D"/>
<dbReference type="PDBsum" id="1R2E"/>
<dbReference type="PDBsum" id="1R2G"/>
<dbReference type="PDBsum" id="1R2H"/>
<dbReference type="PDBsum" id="1R2I"/>
<dbReference type="PDBsum" id="1YSG"/>
<dbReference type="PDBsum" id="1YSI"/>
<dbReference type="PDBsum" id="1YSN"/>
<dbReference type="PDBsum" id="2B48"/>
<dbReference type="PDBsum" id="2LP8"/>
<dbReference type="PDBsum" id="2LPC"/>
<dbReference type="PDBsum" id="2M03"/>
<dbReference type="PDBsum" id="2M04"/>
<dbReference type="PDBsum" id="2ME8"/>
<dbReference type="PDBsum" id="2ME9"/>
<dbReference type="PDBsum" id="2MEJ"/>
<dbReference type="PDBsum" id="2O1Y"/>
<dbReference type="PDBsum" id="2O2M"/>
<dbReference type="PDBsum" id="2O2N"/>
<dbReference type="PDBsum" id="2P1L"/>
<dbReference type="PDBsum" id="2PON"/>
<dbReference type="PDBsum" id="2YJ1"/>
<dbReference type="PDBsum" id="2YQ6"/>
<dbReference type="PDBsum" id="2YQ7"/>
<dbReference type="PDBsum" id="2YXJ"/>
<dbReference type="PDBsum" id="3CVA"/>
<dbReference type="PDBsum" id="3FDL"/>
<dbReference type="PDBsum" id="3FDM"/>
<dbReference type="PDBsum" id="3INQ"/>
<dbReference type="PDBsum" id="3IO8"/>
<dbReference type="PDBsum" id="3PL7"/>
<dbReference type="PDBsum" id="3QKD"/>
<dbReference type="PDBsum" id="3R85"/>
<dbReference type="PDBsum" id="3SP7"/>
<dbReference type="PDBsum" id="3SPF"/>
<dbReference type="PDBsum" id="3WIZ"/>
<dbReference type="PDBsum" id="3ZK6"/>
<dbReference type="PDBsum" id="3ZLN"/>
<dbReference type="PDBsum" id="3ZLO"/>
<dbReference type="PDBsum" id="3ZLR"/>
<dbReference type="PDBsum" id="4A1U"/>
<dbReference type="PDBsum" id="4A1W"/>
<dbReference type="PDBsum" id="4AQ3"/>
<dbReference type="PDBsum" id="4BPK"/>
<dbReference type="PDBsum" id="4C52"/>
<dbReference type="PDBsum" id="4C5D"/>
<dbReference type="PDBsum" id="4CIN"/>
<dbReference type="PDBsum" id="4EHR"/>
<dbReference type="PDBsum" id="4HNJ"/>
<dbReference type="PDBsum" id="4IEH"/>
<dbReference type="PDBsum" id="4PPI"/>
<dbReference type="PDBsum" id="4QVE"/>
<dbReference type="PDBsum" id="4QVF"/>
<dbReference type="PDBsum" id="4QVX"/>
<dbReference type="PDBsum" id="4TUH"/>
<dbReference type="PDBsum" id="4Z9V"/>
<dbReference type="PDBsum" id="5AGW"/>
<dbReference type="PDBsum" id="5AGX"/>
<dbReference type="PDBsum" id="5B1Z"/>
<dbReference type="PDBsum" id="5C3G"/>
<dbReference type="PDBsum" id="5FMJ"/>
<dbReference type="PDBsum" id="5FMK"/>
<dbReference type="PDBsum" id="5VAY"/>
<dbReference type="PDBsum" id="5VX3"/>
<dbReference type="PDBsum" id="6BF2"/>
<dbReference type="PDBsum" id="6DCN"/>
<dbReference type="PDBsum" id="6DCO"/>
<dbReference type="PDBsum" id="6F46"/>
<dbReference type="PDBsum" id="6HJL"/>
<dbReference type="PDBsum" id="6IJQ"/>
<dbReference type="PDBsum" id="6LHD"/>
<dbReference type="PDBsum" id="6O0K"/>
<dbReference type="PDBsum" id="6O0L"/>
<dbReference type="PDBsum" id="6O0M"/>
<dbReference type="PDBsum" id="6O0O"/>
<dbReference type="PDBsum" id="6O0P"/>
<dbReference type="PDBsum" id="6RNU"/>
<dbReference type="PDBsum" id="6ST2"/>
<dbReference type="PDBsum" id="6UVC"/>
<dbReference type="PDBsum" id="6UVD"/>
<dbReference type="PDBsum" id="6UVE"/>
<dbReference type="PDBsum" id="6UVF"/>
<dbReference type="PDBsum" id="6UVG"/>
<dbReference type="PDBsum" id="6UVH"/>
<dbReference type="PDBsum" id="6VWC"/>
<dbReference type="PDBsum" id="6X7I"/>
<dbReference type="PDBsum" id="6YLI"/>
<dbReference type="PDBsum" id="6ZHC"/>
<dbReference type="PDBsum" id="7CA4"/>
<dbReference type="PDBsum" id="7JGV"/>
<dbReference type="PDBsum" id="7JGW"/>
<dbReference type="PDBsum" id="7LH7"/>
<dbReference type="PDBsum" id="7XGF"/>
<dbReference type="PDBsum" id="7XGG"/>
<dbReference type="PDBsum" id="7Y8D"/>
<dbReference type="PDBsum" id="7YAA"/>
<dbReference type="PDBsum" id="8FY0"/>
<dbReference type="PDBsum" id="8IQK"/>
<dbReference type="PDBsum" id="8IQL"/>
<dbReference type="PDBsum" id="8U27"/>
<dbReference type="PDBsum" id="8VWX"/>
<dbReference type="PDBsum" id="8VWZ"/>
<dbReference type="PDBsum" id="8VXM"/>
<dbReference type="PDBsum" id="8VXN"/>
<dbReference type="PDBsum" id="8WLS"/>
<dbReference type="PDBsum" id="8XP5"/>
<dbReference type="PDBsum" id="8ZEB"/>
<dbReference type="PDBsum" id="9AQZ"/>
<dbReference type="BMRB" id="Q07817"/>
<dbReference type="SMR" id="Q07817"/>
<dbReference type="BioGRID" id="107070">
    <property type="interactions" value="229"/>
</dbReference>
<dbReference type="ComplexPortal" id="CPX-1983">
    <molecule id="Q07817-1"/>
    <property type="entry name" value="BAD:BCL-XL complex"/>
</dbReference>
<dbReference type="ComplexPortal" id="CPX-1985">
    <molecule id="Q07817-1"/>
    <property type="entry name" value="BIM:BCL-XL complex"/>
</dbReference>
<dbReference type="ComplexPortal" id="CPX-1987">
    <molecule id="Q07817-1"/>
    <property type="entry name" value="PUMA:BCL-XL complex"/>
</dbReference>
<dbReference type="ComplexPortal" id="CPX-1991">
    <molecule id="Q07817-1"/>
    <property type="entry name" value="BID:BCL-XL complex"/>
</dbReference>
<dbReference type="ComplexPortal" id="CPX-298">
    <molecule id="Q07817-1"/>
    <property type="entry name" value="BCL-XL complex"/>
</dbReference>
<dbReference type="ComplexPortal" id="CPX-860">
    <molecule id="Q07817-1"/>
    <property type="entry name" value="BAK1-Bcl-X complex"/>
</dbReference>
<dbReference type="CORUM" id="Q07817"/>
<dbReference type="DIP" id="DIP-30916N"/>
<dbReference type="ELM" id="Q07817"/>
<dbReference type="FunCoup" id="Q07817">
    <property type="interactions" value="1849"/>
</dbReference>
<dbReference type="IntAct" id="Q07817">
    <property type="interactions" value="120"/>
</dbReference>
<dbReference type="MINT" id="Q07817"/>
<dbReference type="STRING" id="9606.ENSP00000365230"/>
<dbReference type="BindingDB" id="Q07817"/>
<dbReference type="ChEMBL" id="CHEMBL4625"/>
<dbReference type="DrugBank" id="DB07108">
    <property type="generic name" value="4'-FLUORO-1,1'-BIPHENYL-4-CARBOXYLIC ACID"/>
</dbReference>
<dbReference type="DrugBank" id="DB13044">
    <property type="generic name" value="Gossypol"/>
</dbReference>
<dbReference type="DrugBank" id="DB12340">
    <property type="generic name" value="Navitoclax"/>
</dbReference>
<dbReference type="DrugBank" id="DB12191">
    <property type="generic name" value="Obatoclax"/>
</dbReference>
<dbReference type="DrugCentral" id="Q07817"/>
<dbReference type="GuidetoPHARMACOLOGY" id="2845"/>
<dbReference type="TCDB" id="1.A.21.1.1">
    <property type="family name" value="the bcl-2 (bcl-2) family"/>
</dbReference>
<dbReference type="GlyGen" id="Q07817">
    <property type="glycosylation" value="3 sites"/>
</dbReference>
<dbReference type="iPTMnet" id="Q07817"/>
<dbReference type="PhosphoSitePlus" id="Q07817"/>
<dbReference type="BioMuta" id="BCL2L1"/>
<dbReference type="DMDM" id="728955"/>
<dbReference type="jPOST" id="Q07817"/>
<dbReference type="MassIVE" id="Q07817"/>
<dbReference type="PaxDb" id="9606-ENSP00000302564"/>
<dbReference type="PeptideAtlas" id="Q07817"/>
<dbReference type="ProteomicsDB" id="58537">
    <molecule id="Q07817-1"/>
</dbReference>
<dbReference type="ProteomicsDB" id="58538">
    <molecule id="Q07817-2"/>
</dbReference>
<dbReference type="ProteomicsDB" id="58539">
    <molecule id="Q07817-3"/>
</dbReference>
<dbReference type="Pumba" id="Q07817"/>
<dbReference type="TopDownProteomics" id="Q07817-1">
    <molecule id="Q07817-1"/>
</dbReference>
<dbReference type="TopDownProteomics" id="Q07817-2">
    <molecule id="Q07817-2"/>
</dbReference>
<dbReference type="Antibodypedia" id="3430">
    <property type="antibodies" value="2076 antibodies from 54 providers"/>
</dbReference>
<dbReference type="CPTC" id="Q07817">
    <property type="antibodies" value="3 antibodies"/>
</dbReference>
<dbReference type="DNASU" id="598"/>
<dbReference type="Ensembl" id="ENST00000307677.5">
    <molecule id="Q07817-1"/>
    <property type="protein sequence ID" value="ENSP00000302564.4"/>
    <property type="gene ID" value="ENSG00000171552.14"/>
</dbReference>
<dbReference type="Ensembl" id="ENST00000376055.9">
    <molecule id="Q07817-2"/>
    <property type="protein sequence ID" value="ENSP00000365223.4"/>
    <property type="gene ID" value="ENSG00000171552.14"/>
</dbReference>
<dbReference type="Ensembl" id="ENST00000376062.6">
    <molecule id="Q07817-1"/>
    <property type="protein sequence ID" value="ENSP00000365230.2"/>
    <property type="gene ID" value="ENSG00000171552.14"/>
</dbReference>
<dbReference type="Ensembl" id="ENST00000420488.6">
    <molecule id="Q07817-1"/>
    <property type="protein sequence ID" value="ENSP00000390760.2"/>
    <property type="gene ID" value="ENSG00000171552.14"/>
</dbReference>
<dbReference type="Ensembl" id="ENST00000422920.2">
    <molecule id="Q07817-2"/>
    <property type="protein sequence ID" value="ENSP00000411252.2"/>
    <property type="gene ID" value="ENSG00000171552.14"/>
</dbReference>
<dbReference type="Ensembl" id="ENST00000434194.2">
    <molecule id="Q07817-1"/>
    <property type="protein sequence ID" value="ENSP00000401173.2"/>
    <property type="gene ID" value="ENSG00000171552.14"/>
</dbReference>
<dbReference type="Ensembl" id="ENST00000439267.2">
    <molecule id="Q07817-1"/>
    <property type="protein sequence ID" value="ENSP00000389688.2"/>
    <property type="gene ID" value="ENSG00000171552.14"/>
</dbReference>
<dbReference type="Ensembl" id="ENST00000456404.6">
    <molecule id="Q07817-1"/>
    <property type="protein sequence ID" value="ENSP00000395545.2"/>
    <property type="gene ID" value="ENSG00000171552.14"/>
</dbReference>
<dbReference type="Ensembl" id="ENST00000676582.1">
    <molecule id="Q07817-1"/>
    <property type="protein sequence ID" value="ENSP00000503725.1"/>
    <property type="gene ID" value="ENSG00000171552.14"/>
</dbReference>
<dbReference type="Ensembl" id="ENST00000676942.1">
    <molecule id="Q07817-1"/>
    <property type="protein sequence ID" value="ENSP00000504536.1"/>
    <property type="gene ID" value="ENSG00000171552.14"/>
</dbReference>
<dbReference type="Ensembl" id="ENST00000677194.1">
    <molecule id="Q07817-1"/>
    <property type="protein sequence ID" value="ENSP00000504387.1"/>
    <property type="gene ID" value="ENSG00000171552.14"/>
</dbReference>
<dbReference type="Ensembl" id="ENST00000678563.1">
    <molecule id="Q07817-1"/>
    <property type="protein sequence ID" value="ENSP00000504237.1"/>
    <property type="gene ID" value="ENSG00000171552.14"/>
</dbReference>
<dbReference type="GeneID" id="598"/>
<dbReference type="KEGG" id="hsa:598"/>
<dbReference type="MANE-Select" id="ENST00000307677.5">
    <property type="protein sequence ID" value="ENSP00000302564.4"/>
    <property type="RefSeq nucleotide sequence ID" value="NM_138578.3"/>
    <property type="RefSeq protein sequence ID" value="NP_612815.1"/>
</dbReference>
<dbReference type="UCSC" id="uc002wwl.4">
    <molecule id="Q07817-1"/>
    <property type="organism name" value="human"/>
</dbReference>
<dbReference type="AGR" id="HGNC:992"/>
<dbReference type="CTD" id="598"/>
<dbReference type="DisGeNET" id="598"/>
<dbReference type="GeneCards" id="BCL2L1"/>
<dbReference type="HGNC" id="HGNC:992">
    <property type="gene designation" value="BCL2L1"/>
</dbReference>
<dbReference type="HPA" id="ENSG00000171552">
    <property type="expression patterns" value="Low tissue specificity"/>
</dbReference>
<dbReference type="MalaCards" id="BCL2L1"/>
<dbReference type="MIM" id="600039">
    <property type="type" value="gene"/>
</dbReference>
<dbReference type="neXtProt" id="NX_Q07817"/>
<dbReference type="OpenTargets" id="ENSG00000171552"/>
<dbReference type="PharmGKB" id="PA76"/>
<dbReference type="VEuPathDB" id="HostDB:ENSG00000171552"/>
<dbReference type="eggNOG" id="KOG4728">
    <property type="taxonomic scope" value="Eukaryota"/>
</dbReference>
<dbReference type="GeneTree" id="ENSGT01130000278332"/>
<dbReference type="InParanoid" id="Q07817"/>
<dbReference type="OMA" id="HAPTSHI"/>
<dbReference type="OrthoDB" id="6021377at2759"/>
<dbReference type="PAN-GO" id="Q07817">
    <property type="GO annotations" value="6 GO annotations based on evolutionary models"/>
</dbReference>
<dbReference type="PhylomeDB" id="Q07817"/>
<dbReference type="TreeFam" id="TF315834"/>
<dbReference type="PathwayCommons" id="Q07817"/>
<dbReference type="Reactome" id="R-HSA-111453">
    <property type="pathway name" value="BH3-only proteins associate with and inactivate anti-apoptotic BCL-2 members"/>
</dbReference>
<dbReference type="Reactome" id="R-HSA-6785807">
    <property type="pathway name" value="Interleukin-4 and Interleukin-13 signaling"/>
</dbReference>
<dbReference type="Reactome" id="R-HSA-844455">
    <property type="pathway name" value="The NLRP1 inflammasome"/>
</dbReference>
<dbReference type="Reactome" id="R-HSA-9648002">
    <property type="pathway name" value="RAS processing"/>
</dbReference>
<dbReference type="Reactome" id="R-HSA-9692913">
    <property type="pathway name" value="SARS-CoV-1-mediated effects on programmed cell death"/>
</dbReference>
<dbReference type="Reactome" id="R-HSA-9702518">
    <property type="pathway name" value="STAT5 activation downstream of FLT3 ITD mutants"/>
</dbReference>
<dbReference type="Reactome" id="R-HSA-9818030">
    <property type="pathway name" value="NFE2L2 regulating tumorigenic genes"/>
</dbReference>
<dbReference type="SignaLink" id="Q07817"/>
<dbReference type="SIGNOR" id="Q07817"/>
<dbReference type="BioGRID-ORCS" id="598">
    <property type="hits" value="545 hits in 1176 CRISPR screens"/>
</dbReference>
<dbReference type="ChiTaRS" id="BCL2L1">
    <property type="organism name" value="human"/>
</dbReference>
<dbReference type="EvolutionaryTrace" id="Q07817"/>
<dbReference type="GeneWiki" id="BCL2-like_1_(gene)"/>
<dbReference type="GenomeRNAi" id="598"/>
<dbReference type="Pharos" id="Q07817">
    <property type="development level" value="Tchem"/>
</dbReference>
<dbReference type="PRO" id="PR:Q07817"/>
<dbReference type="Proteomes" id="UP000005640">
    <property type="component" value="Chromosome 20"/>
</dbReference>
<dbReference type="RNAct" id="Q07817">
    <property type="molecule type" value="protein"/>
</dbReference>
<dbReference type="Bgee" id="ENSG00000171552">
    <property type="expression patterns" value="Expressed in right lung and 202 other cell types or tissues"/>
</dbReference>
<dbReference type="ExpressionAtlas" id="Q07817">
    <property type="expression patterns" value="baseline and differential"/>
</dbReference>
<dbReference type="GO" id="GO:0097136">
    <property type="term" value="C:Bcl-2 family protein complex"/>
    <property type="evidence" value="ECO:0000314"/>
    <property type="project" value="UniProtKB"/>
</dbReference>
<dbReference type="GO" id="GO:0005813">
    <property type="term" value="C:centrosome"/>
    <property type="evidence" value="ECO:0000314"/>
    <property type="project" value="UniProtKB"/>
</dbReference>
<dbReference type="GO" id="GO:0005737">
    <property type="term" value="C:cytoplasm"/>
    <property type="evidence" value="ECO:0000314"/>
    <property type="project" value="UniProtKB"/>
</dbReference>
<dbReference type="GO" id="GO:0005829">
    <property type="term" value="C:cytosol"/>
    <property type="evidence" value="ECO:0000304"/>
    <property type="project" value="Reactome"/>
</dbReference>
<dbReference type="GO" id="GO:0005783">
    <property type="term" value="C:endoplasmic reticulum"/>
    <property type="evidence" value="ECO:0007669"/>
    <property type="project" value="Ensembl"/>
</dbReference>
<dbReference type="GO" id="GO:0005743">
    <property type="term" value="C:mitochondrial inner membrane"/>
    <property type="evidence" value="ECO:0007669"/>
    <property type="project" value="UniProtKB-SubCell"/>
</dbReference>
<dbReference type="GO" id="GO:0005759">
    <property type="term" value="C:mitochondrial matrix"/>
    <property type="evidence" value="ECO:0007669"/>
    <property type="project" value="UniProtKB-SubCell"/>
</dbReference>
<dbReference type="GO" id="GO:0005741">
    <property type="term" value="C:mitochondrial outer membrane"/>
    <property type="evidence" value="ECO:0000314"/>
    <property type="project" value="UniProtKB"/>
</dbReference>
<dbReference type="GO" id="GO:0005739">
    <property type="term" value="C:mitochondrion"/>
    <property type="evidence" value="ECO:0000314"/>
    <property type="project" value="HGNC-UCL"/>
</dbReference>
<dbReference type="GO" id="GO:0031965">
    <property type="term" value="C:nuclear membrane"/>
    <property type="evidence" value="ECO:0007669"/>
    <property type="project" value="UniProtKB-SubCell"/>
</dbReference>
<dbReference type="GO" id="GO:0030672">
    <property type="term" value="C:synaptic vesicle membrane"/>
    <property type="evidence" value="ECO:0007669"/>
    <property type="project" value="UniProtKB-SubCell"/>
</dbReference>
<dbReference type="GO" id="GO:0051434">
    <property type="term" value="F:BH3 domain binding"/>
    <property type="evidence" value="ECO:0000353"/>
    <property type="project" value="UniProtKB"/>
</dbReference>
<dbReference type="GO" id="GO:0015267">
    <property type="term" value="F:channel activity"/>
    <property type="evidence" value="ECO:0000318"/>
    <property type="project" value="GO_Central"/>
</dbReference>
<dbReference type="GO" id="GO:0042802">
    <property type="term" value="F:identical protein binding"/>
    <property type="evidence" value="ECO:0000353"/>
    <property type="project" value="IntAct"/>
</dbReference>
<dbReference type="GO" id="GO:0019901">
    <property type="term" value="F:protein kinase binding"/>
    <property type="evidence" value="ECO:0000353"/>
    <property type="project" value="UniProtKB"/>
</dbReference>
<dbReference type="GO" id="GO:0008637">
    <property type="term" value="P:apoptotic mitochondrial changes"/>
    <property type="evidence" value="ECO:0000304"/>
    <property type="project" value="ProtInc"/>
</dbReference>
<dbReference type="GO" id="GO:0071839">
    <property type="term" value="P:apoptotic process in bone marrow cell"/>
    <property type="evidence" value="ECO:0007669"/>
    <property type="project" value="Ensembl"/>
</dbReference>
<dbReference type="GO" id="GO:0071312">
    <property type="term" value="P:cellular response to alkaloid"/>
    <property type="evidence" value="ECO:0007669"/>
    <property type="project" value="Ensembl"/>
</dbReference>
<dbReference type="GO" id="GO:0071230">
    <property type="term" value="P:cellular response to amino acid stimulus"/>
    <property type="evidence" value="ECO:0007669"/>
    <property type="project" value="Ensembl"/>
</dbReference>
<dbReference type="GO" id="GO:0071480">
    <property type="term" value="P:cellular response to gamma radiation"/>
    <property type="evidence" value="ECO:0007669"/>
    <property type="project" value="Ensembl"/>
</dbReference>
<dbReference type="GO" id="GO:0051607">
    <property type="term" value="P:defense response to virus"/>
    <property type="evidence" value="ECO:0000314"/>
    <property type="project" value="DIBU"/>
</dbReference>
<dbReference type="GO" id="GO:0097048">
    <property type="term" value="P:dendritic cell apoptotic process"/>
    <property type="evidence" value="ECO:0007669"/>
    <property type="project" value="Ensembl"/>
</dbReference>
<dbReference type="GO" id="GO:0044565">
    <property type="term" value="P:dendritic cell proliferation"/>
    <property type="evidence" value="ECO:0007669"/>
    <property type="project" value="Ensembl"/>
</dbReference>
<dbReference type="GO" id="GO:0035234">
    <property type="term" value="P:ectopic germ cell programmed cell death"/>
    <property type="evidence" value="ECO:0007669"/>
    <property type="project" value="Ensembl"/>
</dbReference>
<dbReference type="GO" id="GO:0006897">
    <property type="term" value="P:endocytosis"/>
    <property type="evidence" value="ECO:0007669"/>
    <property type="project" value="UniProtKB-KW"/>
</dbReference>
<dbReference type="GO" id="GO:0050673">
    <property type="term" value="P:epithelial cell proliferation"/>
    <property type="evidence" value="ECO:0007669"/>
    <property type="project" value="Ensembl"/>
</dbReference>
<dbReference type="GO" id="GO:0097192">
    <property type="term" value="P:extrinsic apoptotic signaling pathway in absence of ligand"/>
    <property type="evidence" value="ECO:0000318"/>
    <property type="project" value="GO_Central"/>
</dbReference>
<dbReference type="GO" id="GO:0009566">
    <property type="term" value="P:fertilization"/>
    <property type="evidence" value="ECO:0007669"/>
    <property type="project" value="Ensembl"/>
</dbReference>
<dbReference type="GO" id="GO:0007281">
    <property type="term" value="P:germ cell development"/>
    <property type="evidence" value="ECO:0007669"/>
    <property type="project" value="Ensembl"/>
</dbReference>
<dbReference type="GO" id="GO:0097284">
    <property type="term" value="P:hepatocyte apoptotic process"/>
    <property type="evidence" value="ECO:0007669"/>
    <property type="project" value="Ensembl"/>
</dbReference>
<dbReference type="GO" id="GO:0001701">
    <property type="term" value="P:in utero embryonic development"/>
    <property type="evidence" value="ECO:0007669"/>
    <property type="project" value="Ensembl"/>
</dbReference>
<dbReference type="GO" id="GO:0008630">
    <property type="term" value="P:intrinsic apoptotic signaling pathway in response to DNA damage"/>
    <property type="evidence" value="ECO:0000318"/>
    <property type="project" value="GO_Central"/>
</dbReference>
<dbReference type="GO" id="GO:0008584">
    <property type="term" value="P:male gonad development"/>
    <property type="evidence" value="ECO:0007669"/>
    <property type="project" value="Ensembl"/>
</dbReference>
<dbReference type="GO" id="GO:2000811">
    <property type="term" value="P:negative regulation of anoikis"/>
    <property type="evidence" value="ECO:0000315"/>
    <property type="project" value="UniProtKB"/>
</dbReference>
<dbReference type="GO" id="GO:0043066">
    <property type="term" value="P:negative regulation of apoptotic process"/>
    <property type="evidence" value="ECO:0000314"/>
    <property type="project" value="UniProtKB"/>
</dbReference>
<dbReference type="GO" id="GO:0010507">
    <property type="term" value="P:negative regulation of autophagy"/>
    <property type="evidence" value="ECO:0000304"/>
    <property type="project" value="UniProtKB"/>
</dbReference>
<dbReference type="GO" id="GO:2000669">
    <property type="term" value="P:negative regulation of dendritic cell apoptotic process"/>
    <property type="evidence" value="ECO:0007669"/>
    <property type="project" value="Ensembl"/>
</dbReference>
<dbReference type="GO" id="GO:0051093">
    <property type="term" value="P:negative regulation of developmental process"/>
    <property type="evidence" value="ECO:0007669"/>
    <property type="project" value="Ensembl"/>
</dbReference>
<dbReference type="GO" id="GO:1902236">
    <property type="term" value="P:negative regulation of endoplasmic reticulum stress-induced intrinsic apoptotic signaling pathway"/>
    <property type="evidence" value="ECO:0000314"/>
    <property type="project" value="UniProtKB"/>
</dbReference>
<dbReference type="GO" id="GO:1900118">
    <property type="term" value="P:negative regulation of execution phase of apoptosis"/>
    <property type="evidence" value="ECO:0000314"/>
    <property type="project" value="UniProtKB"/>
</dbReference>
<dbReference type="GO" id="GO:2001240">
    <property type="term" value="P:negative regulation of extrinsic apoptotic signaling pathway in absence of ligand"/>
    <property type="evidence" value="ECO:0000304"/>
    <property type="project" value="BHF-UCL"/>
</dbReference>
<dbReference type="GO" id="GO:1902042">
    <property type="term" value="P:negative regulation of extrinsic apoptotic signaling pathway via death domain receptors"/>
    <property type="evidence" value="ECO:0000314"/>
    <property type="project" value="MGI"/>
</dbReference>
<dbReference type="GO" id="GO:2001243">
    <property type="term" value="P:negative regulation of intrinsic apoptotic signaling pathway"/>
    <property type="evidence" value="ECO:0000314"/>
    <property type="project" value="BHF-UCL"/>
</dbReference>
<dbReference type="GO" id="GO:1902230">
    <property type="term" value="P:negative regulation of intrinsic apoptotic signaling pathway in response to DNA damage"/>
    <property type="evidence" value="ECO:0000314"/>
    <property type="project" value="BHF-UCL"/>
</dbReference>
<dbReference type="GO" id="GO:1901029">
    <property type="term" value="P:negative regulation of mitochondrial outer membrane permeabilization involved in apoptotic signaling pathway"/>
    <property type="evidence" value="ECO:0000314"/>
    <property type="project" value="ComplexPortal"/>
</dbReference>
<dbReference type="GO" id="GO:0043524">
    <property type="term" value="P:negative regulation of neuron apoptotic process"/>
    <property type="evidence" value="ECO:0007669"/>
    <property type="project" value="Ensembl"/>
</dbReference>
<dbReference type="GO" id="GO:1903077">
    <property type="term" value="P:negative regulation of protein localization to plasma membrane"/>
    <property type="evidence" value="ECO:0000314"/>
    <property type="project" value="BHF-UCL"/>
</dbReference>
<dbReference type="GO" id="GO:0090201">
    <property type="term" value="P:negative regulation of release of cytochrome c from mitochondria"/>
    <property type="evidence" value="ECO:0000314"/>
    <property type="project" value="ComplexPortal"/>
</dbReference>
<dbReference type="GO" id="GO:2000242">
    <property type="term" value="P:negative regulation of reproductive process"/>
    <property type="evidence" value="ECO:0007669"/>
    <property type="project" value="Ensembl"/>
</dbReference>
<dbReference type="GO" id="GO:0051402">
    <property type="term" value="P:neuron apoptotic process"/>
    <property type="evidence" value="ECO:0007669"/>
    <property type="project" value="Ensembl"/>
</dbReference>
<dbReference type="GO" id="GO:0001541">
    <property type="term" value="P:ovarian follicle development"/>
    <property type="evidence" value="ECO:0007669"/>
    <property type="project" value="Ensembl"/>
</dbReference>
<dbReference type="GO" id="GO:0043065">
    <property type="term" value="P:positive regulation of apoptotic process"/>
    <property type="evidence" value="ECO:0000318"/>
    <property type="project" value="GO_Central"/>
</dbReference>
<dbReference type="GO" id="GO:0032946">
    <property type="term" value="P:positive regulation of mononuclear cell proliferation"/>
    <property type="evidence" value="ECO:0007669"/>
    <property type="project" value="Ensembl"/>
</dbReference>
<dbReference type="GO" id="GO:0032465">
    <property type="term" value="P:regulation of cytokinesis"/>
    <property type="evidence" value="ECO:0000315"/>
    <property type="project" value="UniProtKB"/>
</dbReference>
<dbReference type="GO" id="GO:0040008">
    <property type="term" value="P:regulation of growth"/>
    <property type="evidence" value="ECO:0007669"/>
    <property type="project" value="Ensembl"/>
</dbReference>
<dbReference type="GO" id="GO:0046902">
    <property type="term" value="P:regulation of mitochondrial membrane permeability"/>
    <property type="evidence" value="ECO:0000314"/>
    <property type="project" value="HGNC-UCL"/>
</dbReference>
<dbReference type="GO" id="GO:0051881">
    <property type="term" value="P:regulation of mitochondrial membrane potential"/>
    <property type="evidence" value="ECO:0000314"/>
    <property type="project" value="HGNC-UCL"/>
</dbReference>
<dbReference type="GO" id="GO:0001836">
    <property type="term" value="P:release of cytochrome c from mitochondria"/>
    <property type="evidence" value="ECO:0000314"/>
    <property type="project" value="HGNC-UCL"/>
</dbReference>
<dbReference type="GO" id="GO:0046898">
    <property type="term" value="P:response to cycloheximide"/>
    <property type="evidence" value="ECO:0007669"/>
    <property type="project" value="Ensembl"/>
</dbReference>
<dbReference type="GO" id="GO:0034097">
    <property type="term" value="P:response to cytokine"/>
    <property type="evidence" value="ECO:0000314"/>
    <property type="project" value="MGI"/>
</dbReference>
<dbReference type="GO" id="GO:0007283">
    <property type="term" value="P:spermatogenesis"/>
    <property type="evidence" value="ECO:0007669"/>
    <property type="project" value="Ensembl"/>
</dbReference>
<dbReference type="CDD" id="cd06845">
    <property type="entry name" value="Bcl-2_like"/>
    <property type="match status" value="1"/>
</dbReference>
<dbReference type="DisProt" id="DP00298"/>
<dbReference type="FunFam" id="1.10.437.10:FF:000003">
    <property type="entry name" value="Bcl-2-like protein 1"/>
    <property type="match status" value="1"/>
</dbReference>
<dbReference type="Gene3D" id="1.10.437.10">
    <property type="entry name" value="Blc2-like"/>
    <property type="match status" value="1"/>
</dbReference>
<dbReference type="IDEAL" id="IID00720"/>
<dbReference type="InterPro" id="IPR013279">
    <property type="entry name" value="Apop_reg_BclX"/>
</dbReference>
<dbReference type="InterPro" id="IPR036834">
    <property type="entry name" value="Bcl-2-like_sf"/>
</dbReference>
<dbReference type="InterPro" id="IPR046371">
    <property type="entry name" value="Bcl-2_BH1-3"/>
</dbReference>
<dbReference type="InterPro" id="IPR026298">
    <property type="entry name" value="Bcl-2_fam"/>
</dbReference>
<dbReference type="InterPro" id="IPR002475">
    <property type="entry name" value="Bcl2-like"/>
</dbReference>
<dbReference type="InterPro" id="IPR004725">
    <property type="entry name" value="Bcl2/BclX"/>
</dbReference>
<dbReference type="InterPro" id="IPR020717">
    <property type="entry name" value="Bcl2_BH1_motif_CS"/>
</dbReference>
<dbReference type="InterPro" id="IPR020726">
    <property type="entry name" value="Bcl2_BH2_motif_CS"/>
</dbReference>
<dbReference type="InterPro" id="IPR020728">
    <property type="entry name" value="Bcl2_BH3_motif_CS"/>
</dbReference>
<dbReference type="InterPro" id="IPR003093">
    <property type="entry name" value="Bcl2_BH4"/>
</dbReference>
<dbReference type="InterPro" id="IPR020731">
    <property type="entry name" value="Bcl2_BH4_motif_CS"/>
</dbReference>
<dbReference type="NCBIfam" id="TIGR00865">
    <property type="entry name" value="bcl-2"/>
    <property type="match status" value="1"/>
</dbReference>
<dbReference type="PANTHER" id="PTHR11256">
    <property type="entry name" value="BCL-2 RELATED"/>
    <property type="match status" value="1"/>
</dbReference>
<dbReference type="PANTHER" id="PTHR11256:SF12">
    <property type="entry name" value="BCL-2-LIKE PROTEIN 1"/>
    <property type="match status" value="1"/>
</dbReference>
<dbReference type="Pfam" id="PF00452">
    <property type="entry name" value="Bcl-2"/>
    <property type="match status" value="1"/>
</dbReference>
<dbReference type="Pfam" id="PF02180">
    <property type="entry name" value="BH4"/>
    <property type="match status" value="1"/>
</dbReference>
<dbReference type="PRINTS" id="PR01864">
    <property type="entry name" value="APOPREGBCLX"/>
</dbReference>
<dbReference type="PRINTS" id="PR01862">
    <property type="entry name" value="BCL2FAMILY"/>
</dbReference>
<dbReference type="SMART" id="SM00337">
    <property type="entry name" value="BCL"/>
    <property type="match status" value="1"/>
</dbReference>
<dbReference type="SMART" id="SM00265">
    <property type="entry name" value="BH4"/>
    <property type="match status" value="1"/>
</dbReference>
<dbReference type="SUPFAM" id="SSF56854">
    <property type="entry name" value="Bcl-2 inhibitors of programmed cell death"/>
    <property type="match status" value="1"/>
</dbReference>
<dbReference type="PROSITE" id="PS50062">
    <property type="entry name" value="BCL2_FAMILY"/>
    <property type="match status" value="1"/>
</dbReference>
<dbReference type="PROSITE" id="PS01080">
    <property type="entry name" value="BH1"/>
    <property type="match status" value="1"/>
</dbReference>
<dbReference type="PROSITE" id="PS01258">
    <property type="entry name" value="BH2"/>
    <property type="match status" value="1"/>
</dbReference>
<dbReference type="PROSITE" id="PS01259">
    <property type="entry name" value="BH3"/>
    <property type="match status" value="1"/>
</dbReference>
<dbReference type="PROSITE" id="PS01260">
    <property type="entry name" value="BH4_1"/>
    <property type="match status" value="1"/>
</dbReference>
<dbReference type="PROSITE" id="PS50063">
    <property type="entry name" value="BH4_2"/>
    <property type="match status" value="1"/>
</dbReference>
<name>B2CL1_HUMAN</name>
<evidence type="ECO:0000250" key="1"/>
<evidence type="ECO:0000250" key="2">
    <source>
        <dbReference type="UniProtKB" id="P53563"/>
    </source>
</evidence>
<evidence type="ECO:0000250" key="3">
    <source>
        <dbReference type="UniProtKB" id="Q64373"/>
    </source>
</evidence>
<evidence type="ECO:0000255" key="4"/>
<evidence type="ECO:0000256" key="5">
    <source>
        <dbReference type="SAM" id="MobiDB-lite"/>
    </source>
</evidence>
<evidence type="ECO:0000269" key="6">
    <source>
    </source>
</evidence>
<evidence type="ECO:0000269" key="7">
    <source>
    </source>
</evidence>
<evidence type="ECO:0000269" key="8">
    <source>
    </source>
</evidence>
<evidence type="ECO:0000269" key="9">
    <source>
    </source>
</evidence>
<evidence type="ECO:0000269" key="10">
    <source>
    </source>
</evidence>
<evidence type="ECO:0000269" key="11">
    <source>
    </source>
</evidence>
<evidence type="ECO:0000269" key="12">
    <source>
    </source>
</evidence>
<evidence type="ECO:0000269" key="13">
    <source>
    </source>
</evidence>
<evidence type="ECO:0000269" key="14">
    <source>
    </source>
</evidence>
<evidence type="ECO:0000269" key="15">
    <source>
    </source>
</evidence>
<evidence type="ECO:0000269" key="16">
    <source>
    </source>
</evidence>
<evidence type="ECO:0000269" key="17">
    <source>
    </source>
</evidence>
<evidence type="ECO:0000269" key="18">
    <source>
    </source>
</evidence>
<evidence type="ECO:0000269" key="19">
    <source>
    </source>
</evidence>
<evidence type="ECO:0000269" key="20">
    <source>
    </source>
</evidence>
<evidence type="ECO:0000269" key="21">
    <source>
    </source>
</evidence>
<evidence type="ECO:0000269" key="22">
    <source>
    </source>
</evidence>
<evidence type="ECO:0000269" key="23">
    <source>
    </source>
</evidence>
<evidence type="ECO:0000269" key="24">
    <source>
    </source>
</evidence>
<evidence type="ECO:0000269" key="25">
    <source>
    </source>
</evidence>
<evidence type="ECO:0000269" key="26">
    <source>
    </source>
</evidence>
<evidence type="ECO:0000269" key="27">
    <source>
    </source>
</evidence>
<evidence type="ECO:0000269" key="28">
    <source>
    </source>
</evidence>
<evidence type="ECO:0000269" key="29">
    <source>
    </source>
</evidence>
<evidence type="ECO:0000305" key="30"/>
<evidence type="ECO:0007829" key="31">
    <source>
        <dbReference type="PDB" id="1LXL"/>
    </source>
</evidence>
<evidence type="ECO:0007829" key="32">
    <source>
        <dbReference type="PDB" id="2M03"/>
    </source>
</evidence>
<evidence type="ECO:0007829" key="33">
    <source>
        <dbReference type="PDB" id="2ME8"/>
    </source>
</evidence>
<evidence type="ECO:0007829" key="34">
    <source>
        <dbReference type="PDB" id="2ME9"/>
    </source>
</evidence>
<evidence type="ECO:0007829" key="35">
    <source>
        <dbReference type="PDB" id="3SP7"/>
    </source>
</evidence>
<evidence type="ECO:0007829" key="36">
    <source>
        <dbReference type="PDB" id="4A1U"/>
    </source>
</evidence>
<evidence type="ECO:0007829" key="37">
    <source>
        <dbReference type="PDB" id="4QVF"/>
    </source>
</evidence>
<evidence type="ECO:0007829" key="38">
    <source>
        <dbReference type="PDB" id="6BF2"/>
    </source>
</evidence>
<evidence type="ECO:0007829" key="39">
    <source>
        <dbReference type="PDB" id="6F46"/>
    </source>
</evidence>
<evidence type="ECO:0007829" key="40">
    <source>
        <dbReference type="PDB" id="7JGW"/>
    </source>
</evidence>
<evidence type="ECO:0007829" key="41">
    <source>
        <dbReference type="PDB" id="7LH7"/>
    </source>
</evidence>
<evidence type="ECO:0007829" key="42">
    <source>
        <dbReference type="PDB" id="7XGF"/>
    </source>
</evidence>